<keyword id="KW-0002">3D-structure</keyword>
<keyword id="KW-0175">Coiled coil</keyword>
<keyword id="KW-0963">Cytoplasm</keyword>
<keyword id="KW-0903">Direct protein sequencing</keyword>
<keyword id="KW-0225">Disease variant</keyword>
<keyword id="KW-1017">Isopeptide bond</keyword>
<keyword id="KW-0507">mRNA processing</keyword>
<keyword id="KW-0508">mRNA splicing</keyword>
<keyword id="KW-0539">Nucleus</keyword>
<keyword id="KW-0597">Phosphoprotein</keyword>
<keyword id="KW-0648">Protein biosynthesis</keyword>
<keyword id="KW-1267">Proteomics identification</keyword>
<keyword id="KW-1185">Reference proteome</keyword>
<keyword id="KW-0677">Repeat</keyword>
<keyword id="KW-0694">RNA-binding</keyword>
<keyword id="KW-0810">Translation regulation</keyword>
<keyword id="KW-0832">Ubl conjugation</keyword>
<keyword id="KW-0853">WD repeat</keyword>
<reference key="1">
    <citation type="journal article" date="2002" name="J. Biol. Chem.">
        <title>Gemin5, a novel WD repeat protein component of the SMN complex that binds Sm proteins.</title>
        <authorList>
            <person name="Gubitz A.K."/>
            <person name="Mourelatos Z."/>
            <person name="Abel L."/>
            <person name="Rappsilber J."/>
            <person name="Mann M."/>
            <person name="Dreyfuss G."/>
        </authorList>
    </citation>
    <scope>NUCLEOTIDE SEQUENCE [MRNA]</scope>
    <scope>PARTIAL PROTEIN SEQUENCE</scope>
    <scope>FUNCTION</scope>
    <scope>INTERACTION WITH SMN1; SNRPB; SNRPD1; SNRPD2; SNRPD3 AND SNRPE</scope>
    <scope>SUBCELLULAR LOCATION</scope>
    <scope>VARIANT GLN-682</scope>
    <source>
        <tissue>Cervix carcinoma</tissue>
    </source>
</reference>
<reference key="2">
    <citation type="submission" date="2002-01" db="EMBL/GenBank/DDBJ databases">
        <title>The nucleotide sequence of a long cDNA clone isolated from human spleen.</title>
        <authorList>
            <person name="Jikuya H."/>
            <person name="Takano J."/>
            <person name="Nomura N."/>
            <person name="Kikuno R."/>
            <person name="Nagase T."/>
            <person name="Ohara O."/>
        </authorList>
    </citation>
    <scope>NUCLEOTIDE SEQUENCE [LARGE SCALE MRNA]</scope>
    <scope>VARIANT GLN-682</scope>
    <source>
        <tissue>Spleen</tissue>
    </source>
</reference>
<reference key="3">
    <citation type="journal article" date="2004" name="Nature">
        <title>The DNA sequence and comparative analysis of human chromosome 5.</title>
        <authorList>
            <person name="Schmutz J."/>
            <person name="Martin J."/>
            <person name="Terry A."/>
            <person name="Couronne O."/>
            <person name="Grimwood J."/>
            <person name="Lowry S."/>
            <person name="Gordon L.A."/>
            <person name="Scott D."/>
            <person name="Xie G."/>
            <person name="Huang W."/>
            <person name="Hellsten U."/>
            <person name="Tran-Gyamfi M."/>
            <person name="She X."/>
            <person name="Prabhakar S."/>
            <person name="Aerts A."/>
            <person name="Altherr M."/>
            <person name="Bajorek E."/>
            <person name="Black S."/>
            <person name="Branscomb E."/>
            <person name="Caoile C."/>
            <person name="Challacombe J.F."/>
            <person name="Chan Y.M."/>
            <person name="Denys M."/>
            <person name="Detter J.C."/>
            <person name="Escobar J."/>
            <person name="Flowers D."/>
            <person name="Fotopulos D."/>
            <person name="Glavina T."/>
            <person name="Gomez M."/>
            <person name="Gonzales E."/>
            <person name="Goodstein D."/>
            <person name="Grigoriev I."/>
            <person name="Groza M."/>
            <person name="Hammon N."/>
            <person name="Hawkins T."/>
            <person name="Haydu L."/>
            <person name="Israni S."/>
            <person name="Jett J."/>
            <person name="Kadner K."/>
            <person name="Kimball H."/>
            <person name="Kobayashi A."/>
            <person name="Lopez F."/>
            <person name="Lou Y."/>
            <person name="Martinez D."/>
            <person name="Medina C."/>
            <person name="Morgan J."/>
            <person name="Nandkeshwar R."/>
            <person name="Noonan J.P."/>
            <person name="Pitluck S."/>
            <person name="Pollard M."/>
            <person name="Predki P."/>
            <person name="Priest J."/>
            <person name="Ramirez L."/>
            <person name="Retterer J."/>
            <person name="Rodriguez A."/>
            <person name="Rogers S."/>
            <person name="Salamov A."/>
            <person name="Salazar A."/>
            <person name="Thayer N."/>
            <person name="Tice H."/>
            <person name="Tsai M."/>
            <person name="Ustaszewska A."/>
            <person name="Vo N."/>
            <person name="Wheeler J."/>
            <person name="Wu K."/>
            <person name="Yang J."/>
            <person name="Dickson M."/>
            <person name="Cheng J.-F."/>
            <person name="Eichler E.E."/>
            <person name="Olsen A."/>
            <person name="Pennacchio L.A."/>
            <person name="Rokhsar D.S."/>
            <person name="Richardson P."/>
            <person name="Lucas S.M."/>
            <person name="Myers R.M."/>
            <person name="Rubin E.M."/>
        </authorList>
    </citation>
    <scope>NUCLEOTIDE SEQUENCE [LARGE SCALE GENOMIC DNA]</scope>
</reference>
<reference key="4">
    <citation type="journal article" date="2004" name="Genome Res.">
        <title>The status, quality, and expansion of the NIH full-length cDNA project: the Mammalian Gene Collection (MGC).</title>
        <authorList>
            <consortium name="The MGC Project Team"/>
        </authorList>
    </citation>
    <scope>NUCLEOTIDE SEQUENCE [LARGE SCALE MRNA]</scope>
    <scope>VARIANT GLN-682</scope>
    <source>
        <tissue>Cerebellum</tissue>
        <tissue>Lymph</tissue>
    </source>
</reference>
<reference key="5">
    <citation type="journal article" date="2004" name="Nat. Genet.">
        <title>Complete sequencing and characterization of 21,243 full-length human cDNAs.</title>
        <authorList>
            <person name="Ota T."/>
            <person name="Suzuki Y."/>
            <person name="Nishikawa T."/>
            <person name="Otsuki T."/>
            <person name="Sugiyama T."/>
            <person name="Irie R."/>
            <person name="Wakamatsu A."/>
            <person name="Hayashi K."/>
            <person name="Sato H."/>
            <person name="Nagai K."/>
            <person name="Kimura K."/>
            <person name="Makita H."/>
            <person name="Sekine M."/>
            <person name="Obayashi M."/>
            <person name="Nishi T."/>
            <person name="Shibahara T."/>
            <person name="Tanaka T."/>
            <person name="Ishii S."/>
            <person name="Yamamoto J."/>
            <person name="Saito K."/>
            <person name="Kawai Y."/>
            <person name="Isono Y."/>
            <person name="Nakamura Y."/>
            <person name="Nagahari K."/>
            <person name="Murakami K."/>
            <person name="Yasuda T."/>
            <person name="Iwayanagi T."/>
            <person name="Wagatsuma M."/>
            <person name="Shiratori A."/>
            <person name="Sudo H."/>
            <person name="Hosoiri T."/>
            <person name="Kaku Y."/>
            <person name="Kodaira H."/>
            <person name="Kondo H."/>
            <person name="Sugawara M."/>
            <person name="Takahashi M."/>
            <person name="Kanda K."/>
            <person name="Yokoi T."/>
            <person name="Furuya T."/>
            <person name="Kikkawa E."/>
            <person name="Omura Y."/>
            <person name="Abe K."/>
            <person name="Kamihara K."/>
            <person name="Katsuta N."/>
            <person name="Sato K."/>
            <person name="Tanikawa M."/>
            <person name="Yamazaki M."/>
            <person name="Ninomiya K."/>
            <person name="Ishibashi T."/>
            <person name="Yamashita H."/>
            <person name="Murakawa K."/>
            <person name="Fujimori K."/>
            <person name="Tanai H."/>
            <person name="Kimata M."/>
            <person name="Watanabe M."/>
            <person name="Hiraoka S."/>
            <person name="Chiba Y."/>
            <person name="Ishida S."/>
            <person name="Ono Y."/>
            <person name="Takiguchi S."/>
            <person name="Watanabe S."/>
            <person name="Yosida M."/>
            <person name="Hotuta T."/>
            <person name="Kusano J."/>
            <person name="Kanehori K."/>
            <person name="Takahashi-Fujii A."/>
            <person name="Hara H."/>
            <person name="Tanase T.-O."/>
            <person name="Nomura Y."/>
            <person name="Togiya S."/>
            <person name="Komai F."/>
            <person name="Hara R."/>
            <person name="Takeuchi K."/>
            <person name="Arita M."/>
            <person name="Imose N."/>
            <person name="Musashino K."/>
            <person name="Yuuki H."/>
            <person name="Oshima A."/>
            <person name="Sasaki N."/>
            <person name="Aotsuka S."/>
            <person name="Yoshikawa Y."/>
            <person name="Matsunawa H."/>
            <person name="Ichihara T."/>
            <person name="Shiohata N."/>
            <person name="Sano S."/>
            <person name="Moriya S."/>
            <person name="Momiyama H."/>
            <person name="Satoh N."/>
            <person name="Takami S."/>
            <person name="Terashima Y."/>
            <person name="Suzuki O."/>
            <person name="Nakagawa S."/>
            <person name="Senoh A."/>
            <person name="Mizoguchi H."/>
            <person name="Goto Y."/>
            <person name="Shimizu F."/>
            <person name="Wakebe H."/>
            <person name="Hishigaki H."/>
            <person name="Watanabe T."/>
            <person name="Sugiyama A."/>
            <person name="Takemoto M."/>
            <person name="Kawakami B."/>
            <person name="Yamazaki M."/>
            <person name="Watanabe K."/>
            <person name="Kumagai A."/>
            <person name="Itakura S."/>
            <person name="Fukuzumi Y."/>
            <person name="Fujimori Y."/>
            <person name="Komiyama M."/>
            <person name="Tashiro H."/>
            <person name="Tanigami A."/>
            <person name="Fujiwara T."/>
            <person name="Ono T."/>
            <person name="Yamada K."/>
            <person name="Fujii Y."/>
            <person name="Ozaki K."/>
            <person name="Hirao M."/>
            <person name="Ohmori Y."/>
            <person name="Kawabata A."/>
            <person name="Hikiji T."/>
            <person name="Kobatake N."/>
            <person name="Inagaki H."/>
            <person name="Ikema Y."/>
            <person name="Okamoto S."/>
            <person name="Okitani R."/>
            <person name="Kawakami T."/>
            <person name="Noguchi S."/>
            <person name="Itoh T."/>
            <person name="Shigeta K."/>
            <person name="Senba T."/>
            <person name="Matsumura K."/>
            <person name="Nakajima Y."/>
            <person name="Mizuno T."/>
            <person name="Morinaga M."/>
            <person name="Sasaki M."/>
            <person name="Togashi T."/>
            <person name="Oyama M."/>
            <person name="Hata H."/>
            <person name="Watanabe M."/>
            <person name="Komatsu T."/>
            <person name="Mizushima-Sugano J."/>
            <person name="Satoh T."/>
            <person name="Shirai Y."/>
            <person name="Takahashi Y."/>
            <person name="Nakagawa K."/>
            <person name="Okumura K."/>
            <person name="Nagase T."/>
            <person name="Nomura N."/>
            <person name="Kikuchi H."/>
            <person name="Masuho Y."/>
            <person name="Yamashita R."/>
            <person name="Nakai K."/>
            <person name="Yada T."/>
            <person name="Nakamura Y."/>
            <person name="Ohara O."/>
            <person name="Isogai T."/>
            <person name="Sugano S."/>
        </authorList>
    </citation>
    <scope>NUCLEOTIDE SEQUENCE [LARGE SCALE MRNA] OF 1-737</scope>
    <scope>VARIANT GLN-682</scope>
    <source>
        <tissue>Teratocarcinoma</tissue>
    </source>
</reference>
<reference key="6">
    <citation type="journal article" date="2007" name="BMC Genomics">
        <title>The full-ORF clone resource of the German cDNA consortium.</title>
        <authorList>
            <person name="Bechtel S."/>
            <person name="Rosenfelder H."/>
            <person name="Duda A."/>
            <person name="Schmidt C.P."/>
            <person name="Ernst U."/>
            <person name="Wellenreuther R."/>
            <person name="Mehrle A."/>
            <person name="Schuster C."/>
            <person name="Bahr A."/>
            <person name="Bloecker H."/>
            <person name="Heubner D."/>
            <person name="Hoerlein A."/>
            <person name="Michel G."/>
            <person name="Wedler H."/>
            <person name="Koehrer K."/>
            <person name="Ottenwaelder B."/>
            <person name="Poustka A."/>
            <person name="Wiemann S."/>
            <person name="Schupp I."/>
        </authorList>
    </citation>
    <scope>NUCLEOTIDE SEQUENCE [LARGE SCALE MRNA] OF 289-1508</scope>
    <scope>VARIANT GLN-682</scope>
    <source>
        <tissue>Uterus</tissue>
    </source>
</reference>
<reference key="7">
    <citation type="journal article" date="2005" name="Mol. Cell. Biol.">
        <title>Specific sequence features, recognized by the SMN complex, identify snRNAs and determine their fate as snRNPs.</title>
        <authorList>
            <person name="Golembe T.J."/>
            <person name="Yong J."/>
            <person name="Dreyfuss G."/>
        </authorList>
    </citation>
    <scope>FUNCTION</scope>
    <scope>IDENTIFICATION IN THE SMN COMPLEX</scope>
    <scope>IDENTIFICATION IN SMN-SM COMPLEX</scope>
</reference>
<reference key="8">
    <citation type="journal article" date="2006" name="Cell">
        <title>Global, in vivo, and site-specific phosphorylation dynamics in signaling networks.</title>
        <authorList>
            <person name="Olsen J.V."/>
            <person name="Blagoev B."/>
            <person name="Gnad F."/>
            <person name="Macek B."/>
            <person name="Kumar C."/>
            <person name="Mortensen P."/>
            <person name="Mann M."/>
        </authorList>
    </citation>
    <scope>PHOSPHORYLATION [LARGE SCALE ANALYSIS] AT SER-778</scope>
    <scope>IDENTIFICATION BY MASS SPECTROMETRY [LARGE SCALE ANALYSIS]</scope>
    <source>
        <tissue>Cervix carcinoma</tissue>
    </source>
</reference>
<reference key="9">
    <citation type="journal article" date="2006" name="Mol. Cell">
        <title>The Gemin5 protein of the SMN complex identifies snRNAs.</title>
        <authorList>
            <person name="Battle D.J."/>
            <person name="Lau C.-K."/>
            <person name="Wan L."/>
            <person name="Deng H."/>
            <person name="Lotti F."/>
            <person name="Dreyfuss G."/>
        </authorList>
    </citation>
    <scope>FUNCTION</scope>
</reference>
<reference key="10">
    <citation type="journal article" date="2007" name="J. Biol. Chem.">
        <title>A comprehensive interaction map of the human survival of motor neuron (SMN) complex.</title>
        <authorList>
            <person name="Otter S."/>
            <person name="Grimmler M."/>
            <person name="Neuenkirchen N."/>
            <person name="Chari A."/>
            <person name="Sickmann A."/>
            <person name="Fischer U."/>
        </authorList>
    </citation>
    <scope>IDENTIFICATION IN THE SMN COMPLEX</scope>
    <scope>INTERACTION WITH GEMIN2</scope>
</reference>
<reference key="11">
    <citation type="journal article" date="2008" name="Cell">
        <title>An assembly chaperone collaborates with the SMN complex to generate spliceosomal SnRNPs.</title>
        <authorList>
            <person name="Chari A."/>
            <person name="Golas M.M."/>
            <person name="Klingenhager M."/>
            <person name="Neuenkirchen N."/>
            <person name="Sander B."/>
            <person name="Englbrecht C."/>
            <person name="Sickmann A."/>
            <person name="Stark H."/>
            <person name="Fischer U."/>
        </authorList>
    </citation>
    <scope>FUNCTION IN SNRNP BIOGENESIS</scope>
    <scope>IDENTIFICATION IN SMN-SM COMPLEX</scope>
</reference>
<reference key="12">
    <citation type="journal article" date="2008" name="Mol. Cell">
        <title>Kinase-selective enrichment enables quantitative phosphoproteomics of the kinome across the cell cycle.</title>
        <authorList>
            <person name="Daub H."/>
            <person name="Olsen J.V."/>
            <person name="Bairlein M."/>
            <person name="Gnad F."/>
            <person name="Oppermann F.S."/>
            <person name="Korner R."/>
            <person name="Greff Z."/>
            <person name="Keri G."/>
            <person name="Stemmann O."/>
            <person name="Mann M."/>
        </authorList>
    </citation>
    <scope>PHOSPHORYLATION [LARGE SCALE ANALYSIS] AT SER-48; THR-751; SER-770; SER-778 AND SER-847</scope>
    <scope>IDENTIFICATION BY MASS SPECTROMETRY [LARGE SCALE ANALYSIS]</scope>
    <source>
        <tissue>Cervix carcinoma</tissue>
    </source>
</reference>
<reference key="13">
    <citation type="journal article" date="2008" name="Proc. Natl. Acad. Sci. U.S.A.">
        <title>A quantitative atlas of mitotic phosphorylation.</title>
        <authorList>
            <person name="Dephoure N."/>
            <person name="Zhou C."/>
            <person name="Villen J."/>
            <person name="Beausoleil S.A."/>
            <person name="Bakalarski C.E."/>
            <person name="Elledge S.J."/>
            <person name="Gygi S.P."/>
        </authorList>
    </citation>
    <scope>IDENTIFICATION BY MASS SPECTROMETRY [LARGE SCALE ANALYSIS]</scope>
    <source>
        <tissue>Cervix carcinoma</tissue>
    </source>
</reference>
<reference key="14">
    <citation type="journal article" date="2009" name="Nat. Struct. Mol. Biol.">
        <title>Gemin5-snRNA interaction reveals an RNA binding function for WD repeat domains.</title>
        <authorList>
            <person name="Lau C.K."/>
            <person name="Bachorik J.L."/>
            <person name="Dreyfuss G."/>
        </authorList>
    </citation>
    <scope>FUNCTION</scope>
    <scope>DOMAIN</scope>
    <scope>RNA-BINDING REGION</scope>
    <scope>SUBUNIT</scope>
    <scope>MUTAGENESIS OF 271-LYS--ARG-273; TRP-286 AND HIS-290</scope>
</reference>
<reference key="15">
    <citation type="journal article" date="2009" name="PLoS ONE">
        <title>Identification of gemin5 as a novel 7-methylguanosine cap-binding protein.</title>
        <authorList>
            <person name="Bradrick S.S."/>
            <person name="Gromeier M."/>
        </authorList>
    </citation>
    <scope>FUNCTION</scope>
    <scope>SUBCELLULAR LOCATION</scope>
    <scope>IDENTIFICATION BY MASS SPECTROMETRY</scope>
    <scope>INTERACTION WITH DDX20 AND GEMIN4</scope>
    <scope>MUTAGENESIS OF TRP-286</scope>
</reference>
<reference key="16">
    <citation type="journal article" date="2010" name="Mol. Cell">
        <title>Gemin5 delivers snRNA precursors to the SMN complex for snRNP biogenesis.</title>
        <authorList>
            <person name="Yong J."/>
            <person name="Kasim M."/>
            <person name="Bachorik J.L."/>
            <person name="Wan L."/>
            <person name="Dreyfuss G."/>
        </authorList>
    </citation>
    <scope>FUNCTION</scope>
    <scope>SUBCELLULAR LOCATION</scope>
    <scope>SUBUNIT</scope>
</reference>
<reference key="17">
    <citation type="journal article" date="2010" name="Sci. Signal.">
        <title>Quantitative phosphoproteomics reveals widespread full phosphorylation site occupancy during mitosis.</title>
        <authorList>
            <person name="Olsen J.V."/>
            <person name="Vermeulen M."/>
            <person name="Santamaria A."/>
            <person name="Kumar C."/>
            <person name="Miller M.L."/>
            <person name="Jensen L.J."/>
            <person name="Gnad F."/>
            <person name="Cox J."/>
            <person name="Jensen T.S."/>
            <person name="Nigg E.A."/>
            <person name="Brunak S."/>
            <person name="Mann M."/>
        </authorList>
    </citation>
    <scope>IDENTIFICATION BY MASS SPECTROMETRY [LARGE SCALE ANALYSIS]</scope>
    <source>
        <tissue>Cervix carcinoma</tissue>
    </source>
</reference>
<reference key="18">
    <citation type="journal article" date="2011" name="BMC Syst. Biol.">
        <title>Initial characterization of the human central proteome.</title>
        <authorList>
            <person name="Burkard T.R."/>
            <person name="Planyavsky M."/>
            <person name="Kaupe I."/>
            <person name="Breitwieser F.P."/>
            <person name="Buerckstuemmer T."/>
            <person name="Bennett K.L."/>
            <person name="Superti-Furga G."/>
            <person name="Colinge J."/>
        </authorList>
    </citation>
    <scope>IDENTIFICATION BY MASS SPECTROMETRY [LARGE SCALE ANALYSIS]</scope>
</reference>
<reference key="19">
    <citation type="journal article" date="2011" name="Sci. Signal.">
        <title>System-wide temporal characterization of the proteome and phosphoproteome of human embryonic stem cell differentiation.</title>
        <authorList>
            <person name="Rigbolt K.T."/>
            <person name="Prokhorova T.A."/>
            <person name="Akimov V."/>
            <person name="Henningsen J."/>
            <person name="Johansen P.T."/>
            <person name="Kratchmarova I."/>
            <person name="Kassem M."/>
            <person name="Mann M."/>
            <person name="Olsen J.V."/>
            <person name="Blagoev B."/>
        </authorList>
    </citation>
    <scope>PHOSPHORYLATION [LARGE SCALE ANALYSIS] AT SER-757 AND SER-778</scope>
    <scope>IDENTIFICATION BY MASS SPECTROMETRY [LARGE SCALE ANALYSIS]</scope>
</reference>
<reference key="20">
    <citation type="journal article" date="2013" name="J. Proteome Res.">
        <title>Toward a comprehensive characterization of a human cancer cell phosphoproteome.</title>
        <authorList>
            <person name="Zhou H."/>
            <person name="Di Palma S."/>
            <person name="Preisinger C."/>
            <person name="Peng M."/>
            <person name="Polat A.N."/>
            <person name="Heck A.J."/>
            <person name="Mohammed S."/>
        </authorList>
    </citation>
    <scope>PHOSPHORYLATION [LARGE SCALE ANALYSIS] AT SER-48; THR-51; SER-624; SER-757 AND SER-778</scope>
    <scope>IDENTIFICATION BY MASS SPECTROMETRY [LARGE SCALE ANALYSIS]</scope>
    <source>
        <tissue>Cervix carcinoma</tissue>
        <tissue>Erythroleukemia</tissue>
    </source>
</reference>
<reference key="21">
    <citation type="journal article" date="2015" name="J. Biol. Chem.">
        <title>Gemin5 binds to the survival motor neuron mRNA to regulate SMN expression.</title>
        <authorList>
            <person name="Workman E."/>
            <person name="Kalda C."/>
            <person name="Patel A."/>
            <person name="Battle D.J."/>
        </authorList>
    </citation>
    <scope>FUNCTION</scope>
    <scope>SUBCELLULAR LOCATION</scope>
</reference>
<reference key="22">
    <citation type="journal article" date="2016" name="Nucleic Acids Res.">
        <title>The RNA-binding protein Gemin5 binds directly to the ribosome and regulates global translation.</title>
        <authorList>
            <person name="Francisco-Velilla R."/>
            <person name="Fernandez-Chamorro J."/>
            <person name="Ramajo J."/>
            <person name="Martinez-Salas E."/>
        </authorList>
    </citation>
    <scope>FUNCTION</scope>
    <scope>SUBUNIT</scope>
    <scope>SUBCELLULAR LOCATION</scope>
    <scope>INTERACTION WITH RIBOSOME SUBUNITS RPL3 AND RPL4; SNRNP70; HNRNPU; DDX20 AND GEMIN4</scope>
    <scope>IDENTIFICATION IN THE SMN COMPLEX</scope>
    <scope>DOMAIN</scope>
    <scope>MUTAGENESIS OF TRP-14; TYR-15 AND PHE-381</scope>
</reference>
<reference key="23">
    <citation type="journal article" date="2017" name="Nat. Struct. Mol. Biol.">
        <title>Site-specific mapping of the human SUMO proteome reveals co-modification with phosphorylation.</title>
        <authorList>
            <person name="Hendriks I.A."/>
            <person name="Lyon D."/>
            <person name="Young C."/>
            <person name="Jensen L.J."/>
            <person name="Vertegaal A.C."/>
            <person name="Nielsen M.L."/>
        </authorList>
    </citation>
    <scope>SUMOYLATION [LARGE SCALE ANALYSIS] AT LYS-754</scope>
    <scope>IDENTIFICATION BY MASS SPECTROMETRY [LARGE SCALE ANALYSIS]</scope>
</reference>
<reference key="24">
    <citation type="journal article" date="2016" name="Cell Res.">
        <title>Structural basis for specific recognition of pre-snRNA by Gemin5.</title>
        <authorList>
            <person name="Tang X."/>
            <person name="Bharath S.R."/>
            <person name="Piao S."/>
            <person name="Tan V.Q."/>
            <person name="Bowler M.W."/>
            <person name="Song H."/>
        </authorList>
    </citation>
    <scope>X-RAY CRYSTALLOGRAPHY (2.49 ANGSTROMS) OF 1-740 IN COMPLEXES WITH 7-METHYLGUANOSINE CAP AND SNRNA ANALOGS</scope>
    <scope>FUNCTION</scope>
    <scope>DOMAIN</scope>
    <scope>MUTAGENESIS OF TRP-14; TYR-15; PHE-381; TYR-474; LYS-641; TYR-660 AND ARG-684</scope>
</reference>
<reference key="25">
    <citation type="journal article" date="2016" name="Genes Dev.">
        <title>Structural insights into Gemin5-guided selection of pre-snRNAs for snRNP assembly.</title>
        <authorList>
            <person name="Xu C."/>
            <person name="Ishikawa H."/>
            <person name="Izumikawa K."/>
            <person name="Li L."/>
            <person name="He H."/>
            <person name="Nobe Y."/>
            <person name="Yamauchi Y."/>
            <person name="Shahjee H.M."/>
            <person name="Wu X.H."/>
            <person name="Yu Y.T."/>
            <person name="Isobe T."/>
            <person name="Takahashi N."/>
            <person name="Min J."/>
        </authorList>
    </citation>
    <scope>X-RAY CRYSTALLOGRAPHY (1.80 ANGSTROMS) OF 1-739 IN COMPLEXES WITH SNRNA FRAGMENT AND 7-METHYLGUANOSINE CAP</scope>
    <scope>FUNCTION</scope>
    <scope>DOMAIN</scope>
    <scope>MUTAGENESIS OF TRP-14; TYR-15; GLU-197; PHE-381; TYR-474 AND LYS-641</scope>
</reference>
<reference key="26">
    <citation type="journal article" date="2016" name="Genes Dev.">
        <title>Structural basis for snRNA recognition by the double-WD40 repeat domain of Gemin5.</title>
        <authorList>
            <person name="Jin W."/>
            <person name="Wang Y."/>
            <person name="Liu C.P."/>
            <person name="Yang N."/>
            <person name="Jin M."/>
            <person name="Cong Y."/>
            <person name="Wang M."/>
            <person name="Xu R.M."/>
        </authorList>
    </citation>
    <scope>X-RAY CRYSTALLOGRAPHY (1.90 ANGSTROMS) OF 1-726 IN COMPLEXES WITH U4 SNRNA FRAGMENT AND 7-METHYLGUANOSINE CAP</scope>
    <scope>DOMAIN</scope>
    <scope>FUNCTION</scope>
    <scope>MUTAGENESIS OF TRP-14; TYR-15; ARG-33; ARG-335; ARG-359; PHE-381 AND TRP-422</scope>
</reference>
<reference key="27">
    <citation type="submission" date="2016-09" db="PDB data bank">
        <title>Crystal structure of Gemin5 WD40 repeats in complex with m7GpppG.</title>
        <authorList>
            <person name="Chao X."/>
            <person name="Tempel W."/>
            <person name="Bian C."/>
            <person name="He H."/>
            <person name="Cerovina T."/>
            <person name="Bountra C."/>
            <person name="Arrowsmith C.H."/>
            <person name="Edwards A.M."/>
            <person name="Min J."/>
        </authorList>
    </citation>
    <scope>X-RAY CRYSTALLOGRAPHY (1.95 ANGSTROMS) OF 1-739 IN COMPLEX WITH 7-METHYLGUANOSINE CAP</scope>
    <scope>FUNCTION</scope>
    <scope>DOMAIN</scope>
</reference>
<reference key="28">
    <citation type="journal article" date="2021" name="Nat. Commun.">
        <title>Loss of function mutations in GEMIN5 cause a neurodevelopmental disorder.</title>
        <authorList>
            <person name="Kour S."/>
            <person name="Rajan D.S."/>
            <person name="Fortuna T.R."/>
            <person name="Anderson E.N."/>
            <person name="Ward C."/>
            <person name="Lee Y."/>
            <person name="Lee S."/>
            <person name="Shin Y.B."/>
            <person name="Chae J.H."/>
            <person name="Choi M."/>
            <person name="Siquier K."/>
            <person name="Cantagrel V."/>
            <person name="Amiel J."/>
            <person name="Stolerman E.S."/>
            <person name="Barnett S.S."/>
            <person name="Cousin M.A."/>
            <person name="Castro D."/>
            <person name="McDonald K."/>
            <person name="Kirmse B."/>
            <person name="Nemeth A.H."/>
            <person name="Rajasundaram D."/>
            <person name="Innes A.M."/>
            <person name="Lynch D."/>
            <person name="Frosk P."/>
            <person name="Collins A."/>
            <person name="Gibbons M."/>
            <person name="Yang M."/>
            <person name="Desguerre I."/>
            <person name="Boddaert N."/>
            <person name="Gitiaux C."/>
            <person name="Rydning S.L."/>
            <person name="Selmer K.K."/>
            <person name="Urreizti R."/>
            <person name="Garcia-Oguiza A."/>
            <person name="Osorio A.N."/>
            <person name="Verdura E."/>
            <person name="Pujol A."/>
            <person name="McCurry H.R."/>
            <person name="Landers J.E."/>
            <person name="Agnihotri S."/>
            <person name="Andriescu E.C."/>
            <person name="Moody S.B."/>
            <person name="Phornphutkul C."/>
            <person name="Sacoto M.J.G."/>
            <person name="Begtrup A."/>
            <person name="Houlden H."/>
            <person name="Kirschner J."/>
            <person name="Schorling D."/>
            <person name="Rudnik-Schoeneborn S."/>
            <person name="Strom T.M."/>
            <person name="Leiz S."/>
            <person name="Juliette K."/>
            <person name="Richardson R."/>
            <person name="Yang Y."/>
            <person name="Zhang Y."/>
            <person name="Wang M."/>
            <person name="Wang J."/>
            <person name="Wang X."/>
            <person name="Platzer K."/>
            <person name="Donkervoort S."/>
            <person name="Boennemann C.G."/>
            <person name="Wagner M."/>
            <person name="Issa M.Y."/>
            <person name="Elbendary H.M."/>
            <person name="Stanley V."/>
            <person name="Maroofian R."/>
            <person name="Gleeson J.G."/>
            <person name="Zaki M.S."/>
            <person name="Senderek J."/>
            <person name="Pandey U.B."/>
        </authorList>
    </citation>
    <scope>VARIANTS NEDCAM PRO-73; 94-TRP--MET-1508 DEL; ARG-105; ARG-162; TYR-210; 252-ARG--MET-1508 DEL; 534-TYR--MET-1508 DEL; MET-611; GLU-704; ARG-913; PRO-923; PHE-925; HIS-958; PHE-988; PRO-1000; THR-1007; GLU-1019; PRO-1068; SER-1119; HIS-1282; ASN-1286; CYS-1286; PRO-1364 AND PRO-1367</scope>
    <scope>INVOLVEMENT IN NEDCAM</scope>
    <scope>CHARACTERIZATION OF VARIANTS NEDCAM ARG-913 AND PRO-1068</scope>
    <scope>FUNCTION</scope>
    <scope>INTERACTION WITH DDX20 AND GEMIN4</scope>
</reference>
<name>GEMI5_HUMAN</name>
<sequence length="1508" mass="168589">MGQEPRTLPPSPNWYCARCSDAVPGGLFGFAARTSVFLVRVGPGAGESPGTPPFRVIGELVGHTERVSGFTFSHHPGQYNLCATSSDDGTVKIWDVETKTVVTEHALHQHTISTLHWSPRVKDLIVSGDEKGVVFCYWFNRNDSQHLFIEPRTIFCLTCSPHHEDLVAIGYKDGIVVIIDISKKGEVIHRLRGHDDEIHSIAWCPLPGEDCLSINQEETSEEAEITNGNAVAQAPVTKGCYLATGSKDQTIRIWSCSRGRGVMILKLPFLKRRGGGIDPTVKERLWLTLHWPSNQPTQLVSSCFGGELLQWDLTQSWRRKYTLFSASSEGQNHSRIVFNLCPLQTEDDKQLLLSTSMDRDVKCWDIATLECSWTLPSLGGFAYSLAFSSVDIGSLAIGVGDGMIRVWNTLSIKNNYDVKNFWQGVKSKVTALCWHPTKEGCLAFGTDDGKVGLYDTYSNKPPQISSTYHKKTVYTLAWGPPVPPMSLGGEGDRPSLALYSCGGEGIVLQHNPWKLSGEAFDINKLIRDTNSIKYKLPVHTEISWKADGKIMALGNEDGSIEIFQIPNLKLICTIQQHHKLVNTISWHHEHGSQPELSYLMASGSNNAVIYVHNLKTVIESSPESPVTITEPYRTLSGHTAKITSVAWSPHHDGRLVSASYDGTAQVWDALREEPLCNFRGHRGRLLCVAWSPLDPDCIYSGADDFCVHKWLTSMQDHSRPPQGKKSIELEKKRLSQPKAKPKKKKKPTLRTPVKLESIDGNEEESMKENSGPVENGVSDQEGEEQAREPELPCGLAPAVSREPVICTPVSSGFEKSKVTINNKVILLKKEPPKEKPETLIKKRKARSLLPLSTSLDHRSKEELHQDCLVLATAKHSRELNEDVSADVEERFHLGLFTDRATLYRMIDIEGKGHLENGHPELFHQLMLWKGDLKGVLQTAAERGELTDNLVAMAPAAGYHVWLWAVEAFAKQLCFQDQYVKAASHLLSIHKVYEAVELLKSNHFYREAIAIAKARLRPEDPVLKDLYLSWGTVLERDGHYAVAAKCYLGATCAYDAAKVLAKKGDAASLRTAAELAAIVGEDELSASLALRCAQELLLANNWVGAQEALQLHESLQGQRLVFCLLELLSRHLEEKQLSEGKSSSSYHTWNTGTEGPFVERVTAVWKSIFSLDTPEQYQEAFQKLQNIKYPSATNNTPAKQLLLHICHDLTLAVLSQQMASWDEAVQALLRAVVRSYDSGSFTIMQEVYSAFLPDGCDHLRDKLGDHQSPATPAFKSLEAFFLYGRLYEFWWSLSRPCPNSSVWVRAGHRTLSVEPSQQLDTASTEETDPETSQPEPNRPSELDLRLTEEGERMLSTFKELFSEKHASLQNSQRTVAEVQETLAEMIRQHQKSQLCKSTANGPDKNEPEVEAEQPLCSSQSQCKEEKNEPLSLPELTKRLTEANQRMAKFPESIKAWPFPDVLECCLVLLLIRSHFPGCLAQEMQQQAQELLQKYGNTKTYRRHCQTFCM</sequence>
<protein>
    <recommendedName>
        <fullName>Gem-associated protein 5</fullName>
        <shortName>Gemin5</shortName>
    </recommendedName>
</protein>
<dbReference type="EMBL" id="AY063750">
    <property type="protein sequence ID" value="AAL38980.1"/>
    <property type="molecule type" value="mRNA"/>
</dbReference>
<dbReference type="EMBL" id="AK074066">
    <property type="protein sequence ID" value="BAB84892.2"/>
    <property type="status" value="ALT_INIT"/>
    <property type="molecule type" value="mRNA"/>
</dbReference>
<dbReference type="EMBL" id="AC008421">
    <property type="status" value="NOT_ANNOTATED_CDS"/>
    <property type="molecule type" value="Genomic_DNA"/>
</dbReference>
<dbReference type="EMBL" id="BC008776">
    <property type="protein sequence ID" value="AAH08776.2"/>
    <property type="molecule type" value="mRNA"/>
</dbReference>
<dbReference type="EMBL" id="BC014147">
    <property type="protein sequence ID" value="AAH14147.2"/>
    <property type="molecule type" value="mRNA"/>
</dbReference>
<dbReference type="EMBL" id="BC113614">
    <property type="protein sequence ID" value="AAI13615.1"/>
    <property type="molecule type" value="mRNA"/>
</dbReference>
<dbReference type="EMBL" id="AK022748">
    <property type="protein sequence ID" value="BAB14222.1"/>
    <property type="molecule type" value="mRNA"/>
</dbReference>
<dbReference type="EMBL" id="AL117665">
    <property type="protein sequence ID" value="CAB56035.2"/>
    <property type="molecule type" value="mRNA"/>
</dbReference>
<dbReference type="CCDS" id="CCDS4330.1"/>
<dbReference type="PIR" id="T17345">
    <property type="entry name" value="T17345"/>
</dbReference>
<dbReference type="RefSeq" id="NP_001239085.1">
    <property type="nucleotide sequence ID" value="NM_001252156.1"/>
</dbReference>
<dbReference type="RefSeq" id="NP_056280.2">
    <property type="nucleotide sequence ID" value="NM_015465.5"/>
</dbReference>
<dbReference type="PDB" id="5GXH">
    <property type="method" value="X-ray"/>
    <property type="resolution" value="1.80 A"/>
    <property type="chains" value="A=1-739"/>
</dbReference>
<dbReference type="PDB" id="5GXI">
    <property type="method" value="X-ray"/>
    <property type="resolution" value="1.85 A"/>
    <property type="chains" value="A=1-739"/>
</dbReference>
<dbReference type="PDB" id="5H1J">
    <property type="method" value="X-ray"/>
    <property type="resolution" value="2.00 A"/>
    <property type="chains" value="A=1-726"/>
</dbReference>
<dbReference type="PDB" id="5H1K">
    <property type="method" value="X-ray"/>
    <property type="resolution" value="1.90 A"/>
    <property type="chains" value="A/B=1-726"/>
</dbReference>
<dbReference type="PDB" id="5H1L">
    <property type="method" value="X-ray"/>
    <property type="resolution" value="2.10 A"/>
    <property type="chains" value="A=1-726"/>
</dbReference>
<dbReference type="PDB" id="5H1M">
    <property type="method" value="X-ray"/>
    <property type="resolution" value="2.49 A"/>
    <property type="chains" value="A=1-726"/>
</dbReference>
<dbReference type="PDB" id="5H3S">
    <property type="method" value="X-ray"/>
    <property type="resolution" value="3.00 A"/>
    <property type="chains" value="A/B=1-740"/>
</dbReference>
<dbReference type="PDB" id="5H3T">
    <property type="method" value="X-ray"/>
    <property type="resolution" value="2.57 A"/>
    <property type="chains" value="A/B/C/D=1-740"/>
</dbReference>
<dbReference type="PDB" id="5H3U">
    <property type="method" value="X-ray"/>
    <property type="resolution" value="2.50 A"/>
    <property type="chains" value="A/B=1-740"/>
</dbReference>
<dbReference type="PDB" id="5TEE">
    <property type="method" value="X-ray"/>
    <property type="resolution" value="1.65 A"/>
    <property type="chains" value="A=1-739"/>
</dbReference>
<dbReference type="PDB" id="5TEF">
    <property type="method" value="X-ray"/>
    <property type="resolution" value="1.95 A"/>
    <property type="chains" value="A=1-739"/>
</dbReference>
<dbReference type="PDB" id="5THA">
    <property type="method" value="X-ray"/>
    <property type="resolution" value="1.80 A"/>
    <property type="chains" value="A=1-739"/>
</dbReference>
<dbReference type="PDB" id="6RNQ">
    <property type="method" value="X-ray"/>
    <property type="resolution" value="1.95 A"/>
    <property type="chains" value="A/B=845-1096"/>
</dbReference>
<dbReference type="PDB" id="6RNS">
    <property type="method" value="X-ray"/>
    <property type="resolution" value="2.69 A"/>
    <property type="chains" value="A/B=845-1096"/>
</dbReference>
<dbReference type="PDB" id="7XDT">
    <property type="method" value="EM"/>
    <property type="resolution" value="3.31 A"/>
    <property type="chains" value="A/B/C/D/E/F/G/H/I/J=841-1508"/>
</dbReference>
<dbReference type="PDB" id="7XGR">
    <property type="method" value="EM"/>
    <property type="resolution" value="2.60 A"/>
    <property type="chains" value="A=841-1508"/>
</dbReference>
<dbReference type="PDBsum" id="5GXH"/>
<dbReference type="PDBsum" id="5GXI"/>
<dbReference type="PDBsum" id="5H1J"/>
<dbReference type="PDBsum" id="5H1K"/>
<dbReference type="PDBsum" id="5H1L"/>
<dbReference type="PDBsum" id="5H1M"/>
<dbReference type="PDBsum" id="5H3S"/>
<dbReference type="PDBsum" id="5H3T"/>
<dbReference type="PDBsum" id="5H3U"/>
<dbReference type="PDBsum" id="5TEE"/>
<dbReference type="PDBsum" id="5TEF"/>
<dbReference type="PDBsum" id="5THA"/>
<dbReference type="PDBsum" id="6RNQ"/>
<dbReference type="PDBsum" id="6RNS"/>
<dbReference type="PDBsum" id="7XDT"/>
<dbReference type="PDBsum" id="7XGR"/>
<dbReference type="EMDB" id="EMD-33152"/>
<dbReference type="EMDB" id="EMD-33187"/>
<dbReference type="SMR" id="Q8TEQ6"/>
<dbReference type="BioGRID" id="117429">
    <property type="interactions" value="280"/>
</dbReference>
<dbReference type="ComplexPortal" id="CPX-6031">
    <property type="entry name" value="Survival motor neuron complex"/>
</dbReference>
<dbReference type="CORUM" id="Q8TEQ6"/>
<dbReference type="ELM" id="Q8TEQ6"/>
<dbReference type="FunCoup" id="Q8TEQ6">
    <property type="interactions" value="3631"/>
</dbReference>
<dbReference type="IntAct" id="Q8TEQ6">
    <property type="interactions" value="120"/>
</dbReference>
<dbReference type="MINT" id="Q8TEQ6"/>
<dbReference type="STRING" id="9606.ENSP00000285873"/>
<dbReference type="GlyCosmos" id="Q8TEQ6">
    <property type="glycosylation" value="2 sites, 1 glycan"/>
</dbReference>
<dbReference type="GlyGen" id="Q8TEQ6">
    <property type="glycosylation" value="9 sites, 1 O-linked glycan (8 sites)"/>
</dbReference>
<dbReference type="iPTMnet" id="Q8TEQ6"/>
<dbReference type="PhosphoSitePlus" id="Q8TEQ6"/>
<dbReference type="SwissPalm" id="Q8TEQ6"/>
<dbReference type="BioMuta" id="GEMIN5"/>
<dbReference type="DMDM" id="296439335"/>
<dbReference type="jPOST" id="Q8TEQ6"/>
<dbReference type="MassIVE" id="Q8TEQ6"/>
<dbReference type="PaxDb" id="9606-ENSP00000285873"/>
<dbReference type="PeptideAtlas" id="Q8TEQ6"/>
<dbReference type="ProteomicsDB" id="74478"/>
<dbReference type="Pumba" id="Q8TEQ6"/>
<dbReference type="Antibodypedia" id="28334">
    <property type="antibodies" value="71 antibodies from 18 providers"/>
</dbReference>
<dbReference type="DNASU" id="25929"/>
<dbReference type="Ensembl" id="ENST00000285873.8">
    <property type="protein sequence ID" value="ENSP00000285873.6"/>
    <property type="gene ID" value="ENSG00000082516.9"/>
</dbReference>
<dbReference type="GeneID" id="25929"/>
<dbReference type="KEGG" id="hsa:25929"/>
<dbReference type="MANE-Select" id="ENST00000285873.8">
    <property type="protein sequence ID" value="ENSP00000285873.6"/>
    <property type="RefSeq nucleotide sequence ID" value="NM_015465.5"/>
    <property type="RefSeq protein sequence ID" value="NP_056280.2"/>
</dbReference>
<dbReference type="UCSC" id="uc003lvx.4">
    <property type="organism name" value="human"/>
</dbReference>
<dbReference type="AGR" id="HGNC:20043"/>
<dbReference type="CTD" id="25929"/>
<dbReference type="DisGeNET" id="25929"/>
<dbReference type="GeneCards" id="GEMIN5"/>
<dbReference type="HGNC" id="HGNC:20043">
    <property type="gene designation" value="GEMIN5"/>
</dbReference>
<dbReference type="HPA" id="ENSG00000082516">
    <property type="expression patterns" value="Low tissue specificity"/>
</dbReference>
<dbReference type="MalaCards" id="GEMIN5"/>
<dbReference type="MIM" id="607005">
    <property type="type" value="gene"/>
</dbReference>
<dbReference type="MIM" id="619333">
    <property type="type" value="phenotype"/>
</dbReference>
<dbReference type="neXtProt" id="NX_Q8TEQ6"/>
<dbReference type="OpenTargets" id="ENSG00000082516"/>
<dbReference type="Orphanet" id="88616">
    <property type="disease" value="Autosomal recessive non-syndromic intellectual disability"/>
</dbReference>
<dbReference type="PharmGKB" id="PA134945791"/>
<dbReference type="VEuPathDB" id="HostDB:ENSG00000082516"/>
<dbReference type="eggNOG" id="ENOG502QPYZ">
    <property type="taxonomic scope" value="Eukaryota"/>
</dbReference>
<dbReference type="GeneTree" id="ENSGT00620000088064"/>
<dbReference type="HOGENOM" id="CLU_004491_0_1_1"/>
<dbReference type="InParanoid" id="Q8TEQ6"/>
<dbReference type="OMA" id="YWFNRND"/>
<dbReference type="OrthoDB" id="7326421at2759"/>
<dbReference type="PAN-GO" id="Q8TEQ6">
    <property type="GO annotations" value="4 GO annotations based on evolutionary models"/>
</dbReference>
<dbReference type="PhylomeDB" id="Q8TEQ6"/>
<dbReference type="TreeFam" id="TF328886"/>
<dbReference type="PathwayCommons" id="Q8TEQ6"/>
<dbReference type="Reactome" id="R-HSA-191859">
    <property type="pathway name" value="snRNP Assembly"/>
</dbReference>
<dbReference type="Reactome" id="R-HSA-9754678">
    <property type="pathway name" value="SARS-CoV-2 modulates host translation machinery"/>
</dbReference>
<dbReference type="SignaLink" id="Q8TEQ6"/>
<dbReference type="SIGNOR" id="Q8TEQ6"/>
<dbReference type="BioGRID-ORCS" id="25929">
    <property type="hits" value="760 hits in 1128 CRISPR screens"/>
</dbReference>
<dbReference type="CD-CODE" id="6F24707C">
    <property type="entry name" value="Cajal body"/>
</dbReference>
<dbReference type="ChiTaRS" id="GEMIN5">
    <property type="organism name" value="human"/>
</dbReference>
<dbReference type="GeneWiki" id="GEMIN5"/>
<dbReference type="GenomeRNAi" id="25929"/>
<dbReference type="Pharos" id="Q8TEQ6">
    <property type="development level" value="Tbio"/>
</dbReference>
<dbReference type="PRO" id="PR:Q8TEQ6"/>
<dbReference type="Proteomes" id="UP000005640">
    <property type="component" value="Chromosome 5"/>
</dbReference>
<dbReference type="RNAct" id="Q8TEQ6">
    <property type="molecule type" value="protein"/>
</dbReference>
<dbReference type="Bgee" id="ENSG00000082516">
    <property type="expression patterns" value="Expressed in oocyte and 166 other cell types or tissues"/>
</dbReference>
<dbReference type="GO" id="GO:0005737">
    <property type="term" value="C:cytoplasm"/>
    <property type="evidence" value="ECO:0000314"/>
    <property type="project" value="UniProtKB"/>
</dbReference>
<dbReference type="GO" id="GO:0005829">
    <property type="term" value="C:cytosol"/>
    <property type="evidence" value="ECO:0000314"/>
    <property type="project" value="UniProtKB"/>
</dbReference>
<dbReference type="GO" id="GO:0097504">
    <property type="term" value="C:Gemini of Cajal bodies"/>
    <property type="evidence" value="ECO:0007669"/>
    <property type="project" value="UniProtKB-SubCell"/>
</dbReference>
<dbReference type="GO" id="GO:0016020">
    <property type="term" value="C:membrane"/>
    <property type="evidence" value="ECO:0007005"/>
    <property type="project" value="UniProtKB"/>
</dbReference>
<dbReference type="GO" id="GO:0016604">
    <property type="term" value="C:nuclear body"/>
    <property type="evidence" value="ECO:0000314"/>
    <property type="project" value="UniProtKB"/>
</dbReference>
<dbReference type="GO" id="GO:0005654">
    <property type="term" value="C:nucleoplasm"/>
    <property type="evidence" value="ECO:0000314"/>
    <property type="project" value="UniProtKB"/>
</dbReference>
<dbReference type="GO" id="GO:0005634">
    <property type="term" value="C:nucleus"/>
    <property type="evidence" value="ECO:0000318"/>
    <property type="project" value="GO_Central"/>
</dbReference>
<dbReference type="GO" id="GO:0032797">
    <property type="term" value="C:SMN complex"/>
    <property type="evidence" value="ECO:0000314"/>
    <property type="project" value="UniProtKB"/>
</dbReference>
<dbReference type="GO" id="GO:0034718">
    <property type="term" value="C:SMN-Gemin2 complex"/>
    <property type="evidence" value="ECO:0000314"/>
    <property type="project" value="UniProtKB"/>
</dbReference>
<dbReference type="GO" id="GO:0034719">
    <property type="term" value="C:SMN-Sm protein complex"/>
    <property type="evidence" value="ECO:0000314"/>
    <property type="project" value="UniProtKB"/>
</dbReference>
<dbReference type="GO" id="GO:0003730">
    <property type="term" value="F:mRNA 3'-UTR binding"/>
    <property type="evidence" value="ECO:0000314"/>
    <property type="project" value="UniProtKB"/>
</dbReference>
<dbReference type="GO" id="GO:0043022">
    <property type="term" value="F:ribosome binding"/>
    <property type="evidence" value="ECO:0000314"/>
    <property type="project" value="UniProtKB"/>
</dbReference>
<dbReference type="GO" id="GO:0000340">
    <property type="term" value="F:RNA 7-methylguanosine cap binding"/>
    <property type="evidence" value="ECO:0000314"/>
    <property type="project" value="UniProtKB"/>
</dbReference>
<dbReference type="GO" id="GO:0003723">
    <property type="term" value="F:RNA binding"/>
    <property type="evidence" value="ECO:0007005"/>
    <property type="project" value="UniProtKB"/>
</dbReference>
<dbReference type="GO" id="GO:0017069">
    <property type="term" value="F:snRNA binding"/>
    <property type="evidence" value="ECO:0000314"/>
    <property type="project" value="UniProtKB"/>
</dbReference>
<dbReference type="GO" id="GO:0030619">
    <property type="term" value="F:U1 snRNA binding"/>
    <property type="evidence" value="ECO:0000314"/>
    <property type="project" value="UniProtKB"/>
</dbReference>
<dbReference type="GO" id="GO:0030621">
    <property type="term" value="F:U4 snRNA binding"/>
    <property type="evidence" value="ECO:0000314"/>
    <property type="project" value="UniProtKB"/>
</dbReference>
<dbReference type="GO" id="GO:0030622">
    <property type="term" value="F:U4atac snRNA binding"/>
    <property type="evidence" value="ECO:0000314"/>
    <property type="project" value="UniProtKB"/>
</dbReference>
<dbReference type="GO" id="GO:0000398">
    <property type="term" value="P:mRNA splicing, via spliceosome"/>
    <property type="evidence" value="ECO:0000304"/>
    <property type="project" value="UniProtKB"/>
</dbReference>
<dbReference type="GO" id="GO:0065003">
    <property type="term" value="P:protein-containing complex assembly"/>
    <property type="evidence" value="ECO:0000304"/>
    <property type="project" value="UniProtKB"/>
</dbReference>
<dbReference type="GO" id="GO:0006417">
    <property type="term" value="P:regulation of translation"/>
    <property type="evidence" value="ECO:0000315"/>
    <property type="project" value="UniProtKB"/>
</dbReference>
<dbReference type="GO" id="GO:0000387">
    <property type="term" value="P:spliceosomal snRNP assembly"/>
    <property type="evidence" value="ECO:0000314"/>
    <property type="project" value="UniProtKB"/>
</dbReference>
<dbReference type="GO" id="GO:0006412">
    <property type="term" value="P:translation"/>
    <property type="evidence" value="ECO:0007669"/>
    <property type="project" value="UniProtKB-KW"/>
</dbReference>
<dbReference type="DisProt" id="DP03070"/>
<dbReference type="FunFam" id="2.130.10.10:FF:000213">
    <property type="entry name" value="gem-associated protein 5 isoform X1"/>
    <property type="match status" value="1"/>
</dbReference>
<dbReference type="FunFam" id="2.130.10.10:FF:000221">
    <property type="entry name" value="gem-associated protein 5 isoform X1"/>
    <property type="match status" value="1"/>
</dbReference>
<dbReference type="Gene3D" id="2.130.10.10">
    <property type="entry name" value="YVTN repeat-like/Quinoprotein amine dehydrogenase"/>
    <property type="match status" value="2"/>
</dbReference>
<dbReference type="InterPro" id="IPR056432">
    <property type="entry name" value="Beta-prop_GEMI5_1st"/>
</dbReference>
<dbReference type="InterPro" id="IPR056424">
    <property type="entry name" value="Beta-prop_GEMI5_2nd"/>
</dbReference>
<dbReference type="InterPro" id="IPR020472">
    <property type="entry name" value="G-protein_beta_WD-40_rep"/>
</dbReference>
<dbReference type="InterPro" id="IPR056420">
    <property type="entry name" value="GEMI5_RBS"/>
</dbReference>
<dbReference type="InterPro" id="IPR052640">
    <property type="entry name" value="Gemin-5"/>
</dbReference>
<dbReference type="InterPro" id="IPR011047">
    <property type="entry name" value="Quinoprotein_ADH-like_sf"/>
</dbReference>
<dbReference type="InterPro" id="IPR056421">
    <property type="entry name" value="TPR_GEMI5"/>
</dbReference>
<dbReference type="InterPro" id="IPR015943">
    <property type="entry name" value="WD40/YVTN_repeat-like_dom_sf"/>
</dbReference>
<dbReference type="InterPro" id="IPR019775">
    <property type="entry name" value="WD40_repeat_CS"/>
</dbReference>
<dbReference type="InterPro" id="IPR036322">
    <property type="entry name" value="WD40_repeat_dom_sf"/>
</dbReference>
<dbReference type="InterPro" id="IPR001680">
    <property type="entry name" value="WD40_rpt"/>
</dbReference>
<dbReference type="PANTHER" id="PTHR46362">
    <property type="entry name" value="GEM-ASSOCIATED PROTEIN 5"/>
    <property type="match status" value="1"/>
</dbReference>
<dbReference type="PANTHER" id="PTHR46362:SF1">
    <property type="entry name" value="GEM-ASSOCIATED PROTEIN 5"/>
    <property type="match status" value="1"/>
</dbReference>
<dbReference type="Pfam" id="PF23770">
    <property type="entry name" value="Beta-prop_RIG_1st"/>
    <property type="match status" value="1"/>
</dbReference>
<dbReference type="Pfam" id="PF23775">
    <property type="entry name" value="Beta-prop_RIG_2nd"/>
    <property type="match status" value="1"/>
</dbReference>
<dbReference type="Pfam" id="PF23777">
    <property type="entry name" value="GEMI5_RBS"/>
    <property type="match status" value="1"/>
</dbReference>
<dbReference type="Pfam" id="PF23774">
    <property type="entry name" value="TPR_GEMI5"/>
    <property type="match status" value="1"/>
</dbReference>
<dbReference type="Pfam" id="PF00400">
    <property type="entry name" value="WD40"/>
    <property type="match status" value="1"/>
</dbReference>
<dbReference type="PRINTS" id="PR00320">
    <property type="entry name" value="GPROTEINBRPT"/>
</dbReference>
<dbReference type="SMART" id="SM00320">
    <property type="entry name" value="WD40"/>
    <property type="match status" value="12"/>
</dbReference>
<dbReference type="SUPFAM" id="SSF50998">
    <property type="entry name" value="Quinoprotein alcohol dehydrogenase-like"/>
    <property type="match status" value="1"/>
</dbReference>
<dbReference type="SUPFAM" id="SSF50978">
    <property type="entry name" value="WD40 repeat-like"/>
    <property type="match status" value="1"/>
</dbReference>
<dbReference type="PROSITE" id="PS00678">
    <property type="entry name" value="WD_REPEATS_1"/>
    <property type="match status" value="3"/>
</dbReference>
<dbReference type="PROSITE" id="PS50082">
    <property type="entry name" value="WD_REPEATS_2"/>
    <property type="match status" value="3"/>
</dbReference>
<dbReference type="PROSITE" id="PS50294">
    <property type="entry name" value="WD_REPEATS_REGION"/>
    <property type="match status" value="1"/>
</dbReference>
<evidence type="ECO:0000255" key="1"/>
<evidence type="ECO:0000256" key="2">
    <source>
        <dbReference type="SAM" id="MobiDB-lite"/>
    </source>
</evidence>
<evidence type="ECO:0000269" key="3">
    <source>
    </source>
</evidence>
<evidence type="ECO:0000269" key="4">
    <source>
    </source>
</evidence>
<evidence type="ECO:0000269" key="5">
    <source>
    </source>
</evidence>
<evidence type="ECO:0000269" key="6">
    <source>
    </source>
</evidence>
<evidence type="ECO:0000269" key="7">
    <source>
    </source>
</evidence>
<evidence type="ECO:0000269" key="8">
    <source>
    </source>
</evidence>
<evidence type="ECO:0000269" key="9">
    <source>
    </source>
</evidence>
<evidence type="ECO:0000269" key="10">
    <source>
    </source>
</evidence>
<evidence type="ECO:0000269" key="11">
    <source>
    </source>
</evidence>
<evidence type="ECO:0000269" key="12">
    <source>
    </source>
</evidence>
<evidence type="ECO:0000269" key="13">
    <source>
    </source>
</evidence>
<evidence type="ECO:0000269" key="14">
    <source>
    </source>
</evidence>
<evidence type="ECO:0000269" key="15">
    <source>
    </source>
</evidence>
<evidence type="ECO:0000269" key="16">
    <source>
    </source>
</evidence>
<evidence type="ECO:0000269" key="17">
    <source>
    </source>
</evidence>
<evidence type="ECO:0000269" key="18">
    <source>
    </source>
</evidence>
<evidence type="ECO:0000269" key="19">
    <source>
    </source>
</evidence>
<evidence type="ECO:0000269" key="20">
    <source ref="2"/>
</evidence>
<evidence type="ECO:0000269" key="21">
    <source ref="27"/>
</evidence>
<evidence type="ECO:0000305" key="22"/>
<evidence type="ECO:0007744" key="23">
    <source>
        <dbReference type="PDB" id="5GXH"/>
    </source>
</evidence>
<evidence type="ECO:0007744" key="24">
    <source>
        <dbReference type="PDB" id="5GXI"/>
    </source>
</evidence>
<evidence type="ECO:0007744" key="25">
    <source>
        <dbReference type="PDB" id="5H1K"/>
    </source>
</evidence>
<evidence type="ECO:0007744" key="26">
    <source>
        <dbReference type="PDB" id="5H1L"/>
    </source>
</evidence>
<evidence type="ECO:0007744" key="27">
    <source>
        <dbReference type="PDB" id="5H1M"/>
    </source>
</evidence>
<evidence type="ECO:0007744" key="28">
    <source>
        <dbReference type="PDB" id="5TEF"/>
    </source>
</evidence>
<evidence type="ECO:0007744" key="29">
    <source>
    </source>
</evidence>
<evidence type="ECO:0007744" key="30">
    <source>
    </source>
</evidence>
<evidence type="ECO:0007744" key="31">
    <source>
    </source>
</evidence>
<evidence type="ECO:0007744" key="32">
    <source>
    </source>
</evidence>
<evidence type="ECO:0007744" key="33">
    <source>
    </source>
</evidence>
<evidence type="ECO:0007829" key="34">
    <source>
        <dbReference type="PDB" id="5GXH"/>
    </source>
</evidence>
<evidence type="ECO:0007829" key="35">
    <source>
        <dbReference type="PDB" id="5GXI"/>
    </source>
</evidence>
<evidence type="ECO:0007829" key="36">
    <source>
        <dbReference type="PDB" id="5H1J"/>
    </source>
</evidence>
<evidence type="ECO:0007829" key="37">
    <source>
        <dbReference type="PDB" id="5H1K"/>
    </source>
</evidence>
<evidence type="ECO:0007829" key="38">
    <source>
        <dbReference type="PDB" id="5H1L"/>
    </source>
</evidence>
<evidence type="ECO:0007829" key="39">
    <source>
        <dbReference type="PDB" id="5H1M"/>
    </source>
</evidence>
<evidence type="ECO:0007829" key="40">
    <source>
        <dbReference type="PDB" id="5H3T"/>
    </source>
</evidence>
<evidence type="ECO:0007829" key="41">
    <source>
        <dbReference type="PDB" id="5H3U"/>
    </source>
</evidence>
<evidence type="ECO:0007829" key="42">
    <source>
        <dbReference type="PDB" id="5TEE"/>
    </source>
</evidence>
<evidence type="ECO:0007829" key="43">
    <source>
        <dbReference type="PDB" id="5TEF"/>
    </source>
</evidence>
<evidence type="ECO:0007829" key="44">
    <source>
        <dbReference type="PDB" id="5THA"/>
    </source>
</evidence>
<evidence type="ECO:0007829" key="45">
    <source>
        <dbReference type="PDB" id="6RNQ"/>
    </source>
</evidence>
<evidence type="ECO:0007829" key="46">
    <source>
        <dbReference type="PDB" id="7XDT"/>
    </source>
</evidence>
<evidence type="ECO:0007829" key="47">
    <source>
        <dbReference type="PDB" id="7XGR"/>
    </source>
</evidence>
<feature type="chain" id="PRO_0000051004" description="Gem-associated protein 5">
    <location>
        <begin position="1"/>
        <end position="1508"/>
    </location>
</feature>
<feature type="repeat" description="WD 1">
    <location>
        <begin position="62"/>
        <end position="104"/>
    </location>
</feature>
<feature type="repeat" description="WD 2">
    <location>
        <begin position="107"/>
        <end position="148"/>
    </location>
</feature>
<feature type="repeat" description="WD 3">
    <location>
        <begin position="150"/>
        <end position="189"/>
    </location>
</feature>
<feature type="repeat" description="WD 4">
    <location>
        <begin position="193"/>
        <end position="264"/>
    </location>
</feature>
<feature type="repeat" description="WD 5">
    <location>
        <begin position="280"/>
        <end position="321"/>
    </location>
</feature>
<feature type="repeat" description="WD 6">
    <location>
        <begin position="333"/>
        <end position="374"/>
    </location>
</feature>
<feature type="repeat" description="WD 7">
    <location>
        <begin position="377"/>
        <end position="417"/>
    </location>
</feature>
<feature type="repeat" description="WD 8">
    <location>
        <begin position="424"/>
        <end position="464"/>
    </location>
</feature>
<feature type="repeat" description="WD 9">
    <location>
        <begin position="468"/>
        <end position="509"/>
    </location>
</feature>
<feature type="repeat" description="WD 10">
    <location>
        <begin position="533"/>
        <end position="573"/>
    </location>
</feature>
<feature type="repeat" description="WD 11">
    <location>
        <begin position="576"/>
        <end position="622"/>
    </location>
</feature>
<feature type="repeat" description="WD 12">
    <location>
        <begin position="637"/>
        <end position="677"/>
    </location>
</feature>
<feature type="repeat" description="WD 13">
    <location>
        <begin position="680"/>
        <end position="720"/>
    </location>
</feature>
<feature type="region of interest" description="Important for interaction with U1 snRNA" evidence="11">
    <location>
        <begin position="1"/>
        <end position="124"/>
    </location>
</feature>
<feature type="region of interest" description="Interaction with U4 snRNA" evidence="16 17 18 23 24 25 26">
    <location>
        <begin position="13"/>
        <end position="15"/>
    </location>
</feature>
<feature type="region of interest" description="Disordered" evidence="2">
    <location>
        <begin position="715"/>
        <end position="790"/>
    </location>
</feature>
<feature type="region of interest" description="Disordered" evidence="2">
    <location>
        <begin position="1313"/>
        <end position="1343"/>
    </location>
</feature>
<feature type="region of interest" description="Disordered" evidence="2">
    <location>
        <begin position="1389"/>
        <end position="1428"/>
    </location>
</feature>
<feature type="coiled-coil region" evidence="1">
    <location>
        <begin position="1362"/>
        <end position="1393"/>
    </location>
</feature>
<feature type="compositionally biased region" description="Basic residues" evidence="2">
    <location>
        <begin position="739"/>
        <end position="748"/>
    </location>
</feature>
<feature type="compositionally biased region" description="Polar residues" evidence="2">
    <location>
        <begin position="1390"/>
        <end position="1399"/>
    </location>
</feature>
<feature type="site" description="Interaction with U4 snRNA" evidence="16 17 18 23 24 25 26">
    <location>
        <position position="33"/>
    </location>
</feature>
<feature type="site" description="Interaction with U4 snRNA" evidence="16 18 25">
    <location>
        <position position="284"/>
    </location>
</feature>
<feature type="site" description="Interaction with U4 snRNA" evidence="16 18 25">
    <location>
        <position position="335"/>
    </location>
</feature>
<feature type="site" description="Interaction with U4 snRNA" evidence="16 17 18 24 25 26">
    <location>
        <position position="359"/>
    </location>
</feature>
<feature type="site" description="Interaction with U4 snRNA" evidence="16 17 18 23 24 25 26">
    <location>
        <position position="381"/>
    </location>
</feature>
<feature type="site" description="Interaction with U4 snRNA" evidence="16 18 25">
    <location>
        <position position="422"/>
    </location>
</feature>
<feature type="site" description="Interaction with U4 snRNA" evidence="18 25">
    <location>
        <position position="426"/>
    </location>
</feature>
<feature type="site" description="Interaction with U4 snRNA" evidence="18 25">
    <location>
        <position position="470"/>
    </location>
</feature>
<feature type="site" description="Interaction with U4 snRNA and with the 7-methylguanosine cap of RNA molecules" evidence="16 18 21 27 28">
    <location>
        <position position="474"/>
    </location>
</feature>
<feature type="site" description="Interaction with U4 snRNA" evidence="18 25">
    <location>
        <position position="556"/>
    </location>
</feature>
<feature type="site" description="Interaction with U4 snRNA" evidence="18 25">
    <location>
        <position position="579"/>
    </location>
</feature>
<feature type="site" description="Interaction with U4 snRNA and with the 7-methylguanosine cap of RNA molecules" evidence="16 18 21 25 28">
    <location>
        <position position="641"/>
    </location>
</feature>
<feature type="site" description="Interaction with U4 snRNA and with the 7-methylguanosine cap of RNA molecules" evidence="16 18 21 25 27 28">
    <location>
        <position position="660"/>
    </location>
</feature>
<feature type="site" description="Interaction with U4 snRNA and with the 7-methylguanosine cap of RNA molecules" evidence="16 17 18 23 25">
    <location>
        <position position="684"/>
    </location>
</feature>
<feature type="modified residue" description="Phosphoserine" evidence="30 32">
    <location>
        <position position="48"/>
    </location>
</feature>
<feature type="modified residue" description="Phosphothreonine" evidence="32">
    <location>
        <position position="51"/>
    </location>
</feature>
<feature type="modified residue" description="Phosphoserine" evidence="32">
    <location>
        <position position="624"/>
    </location>
</feature>
<feature type="modified residue" description="Phosphothreonine" evidence="30">
    <location>
        <position position="751"/>
    </location>
</feature>
<feature type="modified residue" description="Phosphoserine" evidence="31 32">
    <location>
        <position position="757"/>
    </location>
</feature>
<feature type="modified residue" description="Phosphoserine" evidence="30">
    <location>
        <position position="770"/>
    </location>
</feature>
<feature type="modified residue" description="Phosphoserine" evidence="29 30 31 32">
    <location>
        <position position="778"/>
    </location>
</feature>
<feature type="modified residue" description="Phosphoserine" evidence="30">
    <location>
        <position position="847"/>
    </location>
</feature>
<feature type="cross-link" description="Glycyl lysine isopeptide (Lys-Gly) (interchain with G-Cter in SUMO2)" evidence="33">
    <location>
        <position position="754"/>
    </location>
</feature>
<feature type="sequence variant" id="VAR_085836" description="In NEDCAM; uncertain significance." evidence="19">
    <original>S</original>
    <variation>P</variation>
    <location>
        <position position="73"/>
    </location>
</feature>
<feature type="sequence variant" id="VAR_085837" description="In NEDCAM." evidence="19">
    <location>
        <begin position="94"/>
        <end position="1508"/>
    </location>
</feature>
<feature type="sequence variant" id="VAR_085838" description="In NEDCAM; uncertain significance; dbSNP:rs1764284051." evidence="19">
    <original>H</original>
    <variation>R</variation>
    <location>
        <position position="105"/>
    </location>
</feature>
<feature type="sequence variant" id="VAR_085839" description="In NEDCAM; uncertain significance; dbSNP:rs1333297702." evidence="19">
    <original>H</original>
    <variation>R</variation>
    <location>
        <position position="162"/>
    </location>
</feature>
<feature type="sequence variant" id="VAR_085840" description="In NEDCAM; uncertain significance." evidence="19">
    <original>D</original>
    <variation>Y</variation>
    <location>
        <position position="210"/>
    </location>
</feature>
<feature type="sequence variant" id="VAR_085841" description="In NEDCAM." evidence="19">
    <location>
        <begin position="252"/>
        <end position="1508"/>
    </location>
</feature>
<feature type="sequence variant" id="VAR_085842" description="In NEDCAM." evidence="19">
    <location>
        <begin position="534"/>
        <end position="1508"/>
    </location>
</feature>
<feature type="sequence variant" id="VAR_085843" description="In NEDCAM; uncertain significance; dbSNP:rs374532509." evidence="19">
    <original>V</original>
    <variation>M</variation>
    <location>
        <position position="611"/>
    </location>
</feature>
<feature type="sequence variant" id="VAR_033807" description="In dbSNP:rs1974777." evidence="3 4 5 9 20">
    <original>R</original>
    <variation>Q</variation>
    <location>
        <position position="682"/>
    </location>
</feature>
<feature type="sequence variant" id="VAR_085844" description="In NEDCAM; uncertain significance." evidence="19">
    <original>D</original>
    <variation>E</variation>
    <location>
        <position position="704"/>
    </location>
</feature>
<feature type="sequence variant" id="VAR_085845" description="In NEDCAM; impaired function in spliceosomal snRNP assembly; decreased protein abundance; decreased protein stability; decreased interaction with DDX20; decreased interaction with GEMIN4; dbSNP:rs2113468939." evidence="19">
    <original>H</original>
    <variation>R</variation>
    <location>
        <position position="913"/>
    </location>
</feature>
<feature type="sequence variant" id="VAR_085846" description="In NEDCAM; uncertain significance; dbSNP:rs1763488906." evidence="19">
    <original>H</original>
    <variation>P</variation>
    <location>
        <position position="923"/>
    </location>
</feature>
<feature type="sequence variant" id="VAR_085847" description="In NEDCAM; uncertain significance." evidence="19">
    <original>L</original>
    <variation>F</variation>
    <location>
        <position position="925"/>
    </location>
</feature>
<feature type="sequence variant" id="VAR_085848" description="In NEDCAM; uncertain significance." evidence="19">
    <original>Y</original>
    <variation>H</variation>
    <location>
        <position position="958"/>
    </location>
</feature>
<feature type="sequence variant" id="VAR_085849" description="In NEDCAM; dbSNP:rs760029026." evidence="19">
    <original>I</original>
    <variation>F</variation>
    <location>
        <position position="988"/>
    </location>
</feature>
<feature type="sequence variant" id="VAR_085850" description="In NEDCAM; uncertain significance; dbSNP:rs1763459819." evidence="19">
    <original>S</original>
    <variation>P</variation>
    <location>
        <position position="1000"/>
    </location>
</feature>
<feature type="sequence variant" id="VAR_085851" description="In NEDCAM; uncertain significance." evidence="19">
    <original>A</original>
    <variation>T</variation>
    <location>
        <position position="1007"/>
    </location>
</feature>
<feature type="sequence variant" id="VAR_085852" description="In NEDCAM; uncertain significance." evidence="19">
    <original>D</original>
    <variation>E</variation>
    <location>
        <position position="1019"/>
    </location>
</feature>
<feature type="sequence variant" id="VAR_085853" description="In NEDCAM; impaired function in spliceosomal snRNP assembly; decreased protein abundance; decreased protein stability; decreased interaction with DDX20; decreased interaction with GEMIN4; dbSNP:rs371174241." evidence="19">
    <original>L</original>
    <variation>P</variation>
    <location>
        <position position="1068"/>
    </location>
</feature>
<feature type="sequence variant" id="VAR_085854" description="In NEDCAM; uncertain significance; dbSNP:rs2113459584." evidence="19">
    <original>L</original>
    <variation>S</variation>
    <location>
        <position position="1119"/>
    </location>
</feature>
<feature type="sequence variant" id="VAR_057604" description="In dbSNP:rs6865950.">
    <original>P</original>
    <variation>S</variation>
    <location>
        <position position="1155"/>
    </location>
</feature>
<feature type="sequence variant" id="VAR_085855" description="In NEDCAM; uncertain significance; dbSNP:rs748292248." evidence="19">
    <original>Y</original>
    <variation>H</variation>
    <location>
        <position position="1282"/>
    </location>
</feature>
<feature type="sequence variant" id="VAR_085856" description="In NEDCAM; dbSNP:rs780303963." evidence="19">
    <original>Y</original>
    <variation>C</variation>
    <location>
        <position position="1286"/>
    </location>
</feature>
<feature type="sequence variant" id="VAR_085857" description="In NEDCAM; dbSNP:rs2113452099." evidence="19">
    <original>Y</original>
    <variation>N</variation>
    <location>
        <position position="1286"/>
    </location>
</feature>
<feature type="sequence variant" id="VAR_085858" description="In NEDCAM; uncertain significance." evidence="19">
    <original>H</original>
    <variation>P</variation>
    <location>
        <position position="1364"/>
    </location>
</feature>
<feature type="sequence variant" id="VAR_085859" description="In NEDCAM; uncertain significance; dbSNP:rs200680023." evidence="19">
    <original>L</original>
    <variation>P</variation>
    <location>
        <position position="1367"/>
    </location>
</feature>
<feature type="mutagenesis site" description="Abolishes interaction with U4 snRNA. No effect on interaction with the isolated 7-methylguanosine cap that is normally part of RNA molecules. No effect on interaction with 80S ribosomes." evidence="15 16 17 18">
    <original>W</original>
    <variation>A</variation>
    <location>
        <position position="14"/>
    </location>
</feature>
<feature type="mutagenesis site" description="Abolishes interaction with U4 snRNA. No effect on interaction with the isolated 7-methylguanosine cap that is normally part of RNA molecules. No effect on interaction with 80S ribosomes." evidence="15 16 17 18">
    <original>Y</original>
    <variation>A</variation>
    <location>
        <position position="15"/>
    </location>
</feature>
<feature type="mutagenesis site" description="Abolishes interaction with U4 snRNA." evidence="18">
    <original>R</original>
    <variation>A</variation>
    <location>
        <position position="33"/>
    </location>
</feature>
<feature type="mutagenesis site" description="Abolishes interaction with U4 snRNA." evidence="17">
    <original>E</original>
    <variation>A</variation>
    <location>
        <position position="197"/>
    </location>
</feature>
<feature type="mutagenesis site" description="No effect in interaction with U4 snRNA. No effect on interaction with SMN complex." evidence="11">
    <original>KRR</original>
    <variation>AAA</variation>
    <location>
        <begin position="271"/>
        <end position="273"/>
    </location>
</feature>
<feature type="mutagenesis site" description="Abolishes interaction with U4 snRNA. Abolishes interaction with the 7-methylguanosine cap of RNA molecules. No effect on interaction with SMN complex." evidence="11 12">
    <original>W</original>
    <variation>A</variation>
    <location>
        <position position="286"/>
    </location>
</feature>
<feature type="mutagenesis site" description="No effect in interaction with U4 snRNA. No effect on interaction with SMN complex." evidence="11">
    <original>H</original>
    <variation>A</variation>
    <location>
        <position position="290"/>
    </location>
</feature>
<feature type="mutagenesis site" description="Abolishes interaction with U4 snRNA." evidence="18">
    <original>R</original>
    <variation>E</variation>
    <location>
        <position position="335"/>
    </location>
</feature>
<feature type="mutagenesis site" description="Abolishes interaction with U4 snRNA." evidence="18">
    <original>R</original>
    <variation>A</variation>
    <location>
        <position position="359"/>
    </location>
</feature>
<feature type="mutagenesis site" description="Strongly decreases interaction with U4 snRNA. No effect on interaction with the isolated 7-methylguanosine cap that is normally part of RNA molecules. Abolishes interaction with 80S ribosomes." evidence="15 16 17">
    <original>F</original>
    <variation>A</variation>
    <location>
        <position position="381"/>
    </location>
</feature>
<feature type="mutagenesis site" description="Abolishes interaction with U4 snRNA." evidence="18">
    <original>F</original>
    <variation>D</variation>
    <location>
        <position position="381"/>
    </location>
</feature>
<feature type="mutagenesis site" description="Abolishes interaction with U4 snRNA." evidence="18">
    <original>W</original>
    <variation>E</variation>
    <location>
        <position position="422"/>
    </location>
</feature>
<feature type="mutagenesis site" description="Abolishes interaction with the isolated 7-methylguanosine cap that is normally part of RNA molecules." evidence="16 17">
    <original>Y</original>
    <variation>A</variation>
    <location>
        <position position="474"/>
    </location>
</feature>
<feature type="mutagenesis site" description="Abolishes interaction with the isolated 7-methylguanosine cap that is normally part of RNA molecules." evidence="16 17">
    <original>K</original>
    <variation>A</variation>
    <location>
        <position position="641"/>
    </location>
</feature>
<feature type="mutagenesis site" description="Abolishes interaction with the isolated 7-methylguanosine cap that is normally part of RNA molecules." evidence="16">
    <original>Y</original>
    <variation>A</variation>
    <location>
        <position position="660"/>
    </location>
</feature>
<feature type="mutagenesis site" description="Abolishes interaction with the isolated 7-methylguanosine cap that is normally part of RNA molecules." evidence="16">
    <original>R</original>
    <variation>A</variation>
    <location>
        <position position="684"/>
    </location>
</feature>
<feature type="sequence conflict" description="In Ref. 5; BAB14222." evidence="22" ref="5">
    <original>L</original>
    <variation>P</variation>
    <location>
        <position position="299"/>
    </location>
</feature>
<feature type="sequence conflict" description="In Ref. 5; BAB14222." evidence="22" ref="5">
    <original>T</original>
    <variation>A</variation>
    <location>
        <position position="456"/>
    </location>
</feature>
<feature type="strand" evidence="42">
    <location>
        <begin position="6"/>
        <end position="8"/>
    </location>
</feature>
<feature type="strand" evidence="42">
    <location>
        <begin position="19"/>
        <end position="23"/>
    </location>
</feature>
<feature type="turn" evidence="41">
    <location>
        <begin position="24"/>
        <end position="26"/>
    </location>
</feature>
<feature type="strand" evidence="42">
    <location>
        <begin position="27"/>
        <end position="32"/>
    </location>
</feature>
<feature type="strand" evidence="42">
    <location>
        <begin position="35"/>
        <end position="42"/>
    </location>
</feature>
<feature type="helix" evidence="42">
    <location>
        <begin position="43"/>
        <end position="45"/>
    </location>
</feature>
<feature type="strand" evidence="38">
    <location>
        <begin position="49"/>
        <end position="51"/>
    </location>
</feature>
<feature type="strand" evidence="42">
    <location>
        <begin position="53"/>
        <end position="60"/>
    </location>
</feature>
<feature type="strand" evidence="42">
    <location>
        <begin position="67"/>
        <end position="72"/>
    </location>
</feature>
<feature type="strand" evidence="42">
    <location>
        <begin position="81"/>
        <end position="86"/>
    </location>
</feature>
<feature type="turn" evidence="40">
    <location>
        <begin position="87"/>
        <end position="89"/>
    </location>
</feature>
<feature type="strand" evidence="42">
    <location>
        <begin position="91"/>
        <end position="95"/>
    </location>
</feature>
<feature type="turn" evidence="42">
    <location>
        <begin position="96"/>
        <end position="99"/>
    </location>
</feature>
<feature type="strand" evidence="42">
    <location>
        <begin position="100"/>
        <end position="105"/>
    </location>
</feature>
<feature type="strand" evidence="42">
    <location>
        <begin position="112"/>
        <end position="117"/>
    </location>
</feature>
<feature type="strand" evidence="42">
    <location>
        <begin position="119"/>
        <end position="121"/>
    </location>
</feature>
<feature type="strand" evidence="42">
    <location>
        <begin position="124"/>
        <end position="129"/>
    </location>
</feature>
<feature type="strand" evidence="42">
    <location>
        <begin position="132"/>
        <end position="138"/>
    </location>
</feature>
<feature type="helix" evidence="42">
    <location>
        <begin position="139"/>
        <end position="141"/>
    </location>
</feature>
<feature type="strand" evidence="42">
    <location>
        <begin position="143"/>
        <end position="148"/>
    </location>
</feature>
<feature type="strand" evidence="42">
    <location>
        <begin position="154"/>
        <end position="159"/>
    </location>
</feature>
<feature type="strand" evidence="42">
    <location>
        <begin position="166"/>
        <end position="171"/>
    </location>
</feature>
<feature type="strand" evidence="42">
    <location>
        <begin position="176"/>
        <end position="180"/>
    </location>
</feature>
<feature type="helix" evidence="42">
    <location>
        <begin position="181"/>
        <end position="183"/>
    </location>
</feature>
<feature type="strand" evidence="42">
    <location>
        <begin position="187"/>
        <end position="191"/>
    </location>
</feature>
<feature type="strand" evidence="42">
    <location>
        <begin position="198"/>
        <end position="203"/>
    </location>
</feature>
<feature type="strand" evidence="44">
    <location>
        <begin position="205"/>
        <end position="207"/>
    </location>
</feature>
<feature type="strand" evidence="37">
    <location>
        <begin position="208"/>
        <end position="212"/>
    </location>
</feature>
<feature type="strand" evidence="42">
    <location>
        <begin position="241"/>
        <end position="246"/>
    </location>
</feature>
<feature type="strand" evidence="42">
    <location>
        <begin position="249"/>
        <end position="255"/>
    </location>
</feature>
<feature type="turn" evidence="42">
    <location>
        <begin position="256"/>
        <end position="259"/>
    </location>
</feature>
<feature type="strand" evidence="42">
    <location>
        <begin position="260"/>
        <end position="266"/>
    </location>
</feature>
<feature type="strand" evidence="36">
    <location>
        <begin position="279"/>
        <end position="281"/>
    </location>
</feature>
<feature type="strand" evidence="42">
    <location>
        <begin position="298"/>
        <end position="302"/>
    </location>
</feature>
<feature type="helix" evidence="42">
    <location>
        <begin position="304"/>
        <end position="306"/>
    </location>
</feature>
<feature type="strand" evidence="42">
    <location>
        <begin position="308"/>
        <end position="312"/>
    </location>
</feature>
<feature type="turn" evidence="35">
    <location>
        <begin position="314"/>
        <end position="319"/>
    </location>
</feature>
<feature type="strand" evidence="42">
    <location>
        <begin position="320"/>
        <end position="323"/>
    </location>
</feature>
<feature type="turn" evidence="42">
    <location>
        <begin position="324"/>
        <end position="327"/>
    </location>
</feature>
<feature type="strand" evidence="42">
    <location>
        <begin position="328"/>
        <end position="330"/>
    </location>
</feature>
<feature type="strand" evidence="42">
    <location>
        <begin position="337"/>
        <end position="345"/>
    </location>
</feature>
<feature type="strand" evidence="42">
    <location>
        <begin position="350"/>
        <end position="356"/>
    </location>
</feature>
<feature type="strand" evidence="42">
    <location>
        <begin position="359"/>
        <end position="365"/>
    </location>
</feature>
<feature type="turn" evidence="42">
    <location>
        <begin position="366"/>
        <end position="368"/>
    </location>
</feature>
<feature type="strand" evidence="42">
    <location>
        <begin position="371"/>
        <end position="376"/>
    </location>
</feature>
<feature type="strand" evidence="42">
    <location>
        <begin position="378"/>
        <end position="380"/>
    </location>
</feature>
<feature type="strand" evidence="42">
    <location>
        <begin position="382"/>
        <end position="387"/>
    </location>
</feature>
<feature type="strand" evidence="42">
    <location>
        <begin position="389"/>
        <end position="391"/>
    </location>
</feature>
<feature type="strand" evidence="42">
    <location>
        <begin position="394"/>
        <end position="399"/>
    </location>
</feature>
<feature type="strand" evidence="42">
    <location>
        <begin position="404"/>
        <end position="408"/>
    </location>
</feature>
<feature type="strand" evidence="42">
    <location>
        <begin position="418"/>
        <end position="421"/>
    </location>
</feature>
<feature type="turn" evidence="42">
    <location>
        <begin position="423"/>
        <end position="425"/>
    </location>
</feature>
<feature type="strand" evidence="42">
    <location>
        <begin position="429"/>
        <end position="434"/>
    </location>
</feature>
<feature type="strand" evidence="42">
    <location>
        <begin position="436"/>
        <end position="438"/>
    </location>
</feature>
<feature type="strand" evidence="42">
    <location>
        <begin position="441"/>
        <end position="446"/>
    </location>
</feature>
<feature type="strand" evidence="42">
    <location>
        <begin position="451"/>
        <end position="455"/>
    </location>
</feature>
<feature type="strand" evidence="42">
    <location>
        <begin position="458"/>
        <end position="460"/>
    </location>
</feature>
<feature type="strand" evidence="40">
    <location>
        <begin position="463"/>
        <end position="468"/>
    </location>
</feature>
<feature type="strand" evidence="42">
    <location>
        <begin position="473"/>
        <end position="479"/>
    </location>
</feature>
<feature type="helix" evidence="42">
    <location>
        <begin position="485"/>
        <end position="487"/>
    </location>
</feature>
<feature type="turn" evidence="36">
    <location>
        <begin position="490"/>
        <end position="492"/>
    </location>
</feature>
<feature type="strand" evidence="42">
    <location>
        <begin position="497"/>
        <end position="502"/>
    </location>
</feature>
<feature type="strand" evidence="42">
    <location>
        <begin position="507"/>
        <end position="510"/>
    </location>
</feature>
<feature type="helix" evidence="39">
    <location>
        <begin position="512"/>
        <end position="514"/>
    </location>
</feature>
<feature type="strand" evidence="43">
    <location>
        <begin position="519"/>
        <end position="521"/>
    </location>
</feature>
<feature type="helix" evidence="42">
    <location>
        <begin position="523"/>
        <end position="530"/>
    </location>
</feature>
<feature type="strand" evidence="42">
    <location>
        <begin position="539"/>
        <end position="544"/>
    </location>
</feature>
<feature type="strand" evidence="42">
    <location>
        <begin position="548"/>
        <end position="555"/>
    </location>
</feature>
<feature type="strand" evidence="42">
    <location>
        <begin position="560"/>
        <end position="564"/>
    </location>
</feature>
<feature type="turn" evidence="42">
    <location>
        <begin position="565"/>
        <end position="568"/>
    </location>
</feature>
<feature type="strand" evidence="42">
    <location>
        <begin position="569"/>
        <end position="574"/>
    </location>
</feature>
<feature type="strand" evidence="42">
    <location>
        <begin position="581"/>
        <end position="586"/>
    </location>
</feature>
<feature type="strand" evidence="42">
    <location>
        <begin position="591"/>
        <end position="593"/>
    </location>
</feature>
<feature type="helix" evidence="42">
    <location>
        <begin position="594"/>
        <end position="598"/>
    </location>
</feature>
<feature type="strand" evidence="42">
    <location>
        <begin position="599"/>
        <end position="607"/>
    </location>
</feature>
<feature type="strand" evidence="42">
    <location>
        <begin position="609"/>
        <end position="613"/>
    </location>
</feature>
<feature type="helix" evidence="42">
    <location>
        <begin position="615"/>
        <end position="620"/>
    </location>
</feature>
<feature type="strand" evidence="42">
    <location>
        <begin position="626"/>
        <end position="628"/>
    </location>
</feature>
<feature type="strand" evidence="42">
    <location>
        <begin position="632"/>
        <end position="635"/>
    </location>
</feature>
<feature type="strand" evidence="42">
    <location>
        <begin position="642"/>
        <end position="647"/>
    </location>
</feature>
<feature type="strand" evidence="42">
    <location>
        <begin position="651"/>
        <end position="659"/>
    </location>
</feature>
<feature type="strand" evidence="42">
    <location>
        <begin position="664"/>
        <end position="668"/>
    </location>
</feature>
<feature type="helix" evidence="42">
    <location>
        <begin position="669"/>
        <end position="671"/>
    </location>
</feature>
<feature type="strand" evidence="42">
    <location>
        <begin position="673"/>
        <end position="678"/>
    </location>
</feature>
<feature type="strand" evidence="42">
    <location>
        <begin position="685"/>
        <end position="690"/>
    </location>
</feature>
<feature type="strand" evidence="42">
    <location>
        <begin position="697"/>
        <end position="702"/>
    </location>
</feature>
<feature type="strand" evidence="42">
    <location>
        <begin position="707"/>
        <end position="711"/>
    </location>
</feature>
<feature type="helix" evidence="42">
    <location>
        <begin position="712"/>
        <end position="714"/>
    </location>
</feature>
<feature type="strand" evidence="34">
    <location>
        <begin position="717"/>
        <end position="719"/>
    </location>
</feature>
<feature type="helix" evidence="45">
    <location>
        <begin position="850"/>
        <end position="856"/>
    </location>
</feature>
<feature type="helix" evidence="45">
    <location>
        <begin position="860"/>
        <end position="874"/>
    </location>
</feature>
<feature type="helix" evidence="45">
    <location>
        <begin position="885"/>
        <end position="889"/>
    </location>
</feature>
<feature type="helix" evidence="45">
    <location>
        <begin position="891"/>
        <end position="895"/>
    </location>
</feature>
<feature type="helix" evidence="45">
    <location>
        <begin position="899"/>
        <end position="916"/>
    </location>
</feature>
<feature type="helix" evidence="45">
    <location>
        <begin position="919"/>
        <end position="929"/>
    </location>
</feature>
<feature type="helix" evidence="45">
    <location>
        <begin position="932"/>
        <end position="942"/>
    </location>
</feature>
<feature type="helix" evidence="45">
    <location>
        <begin position="947"/>
        <end position="952"/>
    </location>
</feature>
<feature type="helix" evidence="45">
    <location>
        <begin position="953"/>
        <end position="956"/>
    </location>
</feature>
<feature type="helix" evidence="45">
    <location>
        <begin position="958"/>
        <end position="974"/>
    </location>
</feature>
<feature type="helix" evidence="45">
    <location>
        <begin position="978"/>
        <end position="987"/>
    </location>
</feature>
<feature type="helix" evidence="45">
    <location>
        <begin position="991"/>
        <end position="1000"/>
    </location>
</feature>
<feature type="helix" evidence="45">
    <location>
        <begin position="1004"/>
        <end position="1014"/>
    </location>
</feature>
<feature type="helix" evidence="45">
    <location>
        <begin position="1020"/>
        <end position="1035"/>
    </location>
</feature>
<feature type="helix" evidence="45">
    <location>
        <begin position="1039"/>
        <end position="1048"/>
    </location>
</feature>
<feature type="helix" evidence="45">
    <location>
        <begin position="1052"/>
        <end position="1060"/>
    </location>
</feature>
<feature type="helix" evidence="45">
    <location>
        <begin position="1065"/>
        <end position="1078"/>
    </location>
</feature>
<feature type="helix" evidence="45">
    <location>
        <begin position="1081"/>
        <end position="1095"/>
    </location>
</feature>
<feature type="turn" evidence="47">
    <location>
        <begin position="1096"/>
        <end position="1099"/>
    </location>
</feature>
<feature type="helix" evidence="47">
    <location>
        <begin position="1101"/>
        <end position="1107"/>
    </location>
</feature>
<feature type="strand" evidence="47">
    <location>
        <begin position="1110"/>
        <end position="1112"/>
    </location>
</feature>
<feature type="helix" evidence="47">
    <location>
        <begin position="1115"/>
        <end position="1136"/>
    </location>
</feature>
<feature type="helix" evidence="47">
    <location>
        <begin position="1156"/>
        <end position="1168"/>
    </location>
</feature>
<feature type="helix" evidence="47">
    <location>
        <begin position="1174"/>
        <end position="1184"/>
    </location>
</feature>
<feature type="strand" evidence="46">
    <location>
        <begin position="1193"/>
        <end position="1195"/>
    </location>
</feature>
<feature type="helix" evidence="47">
    <location>
        <begin position="1197"/>
        <end position="1216"/>
    </location>
</feature>
<feature type="helix" evidence="47">
    <location>
        <begin position="1220"/>
        <end position="1236"/>
    </location>
</feature>
<feature type="helix" evidence="47">
    <location>
        <begin position="1240"/>
        <end position="1250"/>
    </location>
</feature>
<feature type="strand" evidence="47">
    <location>
        <begin position="1251"/>
        <end position="1253"/>
    </location>
</feature>
<feature type="helix" evidence="47">
    <location>
        <begin position="1256"/>
        <end position="1258"/>
    </location>
</feature>
<feature type="helix" evidence="47">
    <location>
        <begin position="1259"/>
        <end position="1263"/>
    </location>
</feature>
<feature type="turn" evidence="47">
    <location>
        <begin position="1264"/>
        <end position="1266"/>
    </location>
</feature>
<feature type="helix" evidence="47">
    <location>
        <begin position="1270"/>
        <end position="1292"/>
    </location>
</feature>
<feature type="helix" evidence="47">
    <location>
        <begin position="1350"/>
        <end position="1353"/>
    </location>
</feature>
<feature type="helix" evidence="47">
    <location>
        <begin position="1354"/>
        <end position="1359"/>
    </location>
</feature>
<feature type="helix" evidence="47">
    <location>
        <begin position="1362"/>
        <end position="1388"/>
    </location>
</feature>
<feature type="helix" evidence="47">
    <location>
        <begin position="1431"/>
        <end position="1442"/>
    </location>
</feature>
<feature type="helix" evidence="47">
    <location>
        <begin position="1445"/>
        <end position="1447"/>
    </location>
</feature>
<feature type="helix" evidence="47">
    <location>
        <begin position="1450"/>
        <end position="1454"/>
    </location>
</feature>
<feature type="helix" evidence="47">
    <location>
        <begin position="1460"/>
        <end position="1471"/>
    </location>
</feature>
<feature type="strand" evidence="47">
    <location>
        <begin position="1473"/>
        <end position="1476"/>
    </location>
</feature>
<feature type="turn" evidence="47">
    <location>
        <begin position="1478"/>
        <end position="1481"/>
    </location>
</feature>
<feature type="helix" evidence="47">
    <location>
        <begin position="1482"/>
        <end position="1494"/>
    </location>
</feature>
<gene>
    <name type="primary">GEMIN5</name>
</gene>
<comment type="function">
    <text evidence="3 6 7 10 11 12 13 14 15 16 17 18 19 21">The SMN complex catalyzes the assembly of small nuclear ribonucleoproteins (snRNPs), the building blocks of the spliceosome, and thereby plays an important role in the splicing of cellular pre-mRNAs (PubMed:16857593, PubMed:18984161, PubMed:20513430, PubMed:33963192). Most spliceosomal snRNPs contain a common set of Sm proteins SNRPB, SNRPD1, SNRPD2, SNRPD3, SNRPE, SNRPF and SNRPG that assemble in a heptameric protein ring on the Sm site of the small nuclear RNA to form the core snRNP (Sm core). In the cytosol, the Sm proteins SNRPD1, SNRPD2, SNRPE, SNRPF and SNRPG are trapped in an inactive 6S pICln-Sm complex by the chaperone CLNS1A that controls the assembly of the core snRNP (PubMed:18984161). To assemble core snRNPs, the SMN complex accepts the trapped 5Sm proteins from CLNS1A forming an intermediate (PubMed:18984161). Binding of snRNA inside 5Sm ultimately triggers eviction of the SMN complex, thereby allowing binding of SNRPD3 and SNRPB to complete assembly of the core snRNP. Within the SMN complex, GEMIN5 recognizes and delivers the small nuclear RNAs (snRNAs) to the SMN complex (PubMed:11714716, PubMed:16314521, PubMed:16857593, PubMed:19377484, PubMed:19750007, PubMed:20513430, PubMed:27834343, PubMed:27881600, PubMed:27881601). Binds to the 7-methylguanosine cap of RNA molecules (PubMed:19750007, PubMed:27834343, PubMed:27881600, PubMed:27881601, Ref.27). Binds to the 3'-UTR of SMN1 mRNA and regulates its translation; does not affect mRNA stability (PubMed:25911097). May play a role in the regulation of protein synthesis via its interaction with ribosomes (PubMed:27507887).</text>
</comment>
<comment type="subunit">
    <text evidence="3 8 10 11 12 13 15 19">Part of the core SMN complex that contains SMN1, GEMIN2/SIP1, DDX20/GEMIN3, GEMIN4, GEMIN5, GEMIN6, GEMIN7, GEMIN8 and STRAP/UNRIP (PubMed:16314521, PubMed:17178713, PubMed:19377484, PubMed:20513430, PubMed:27507887). Part of the SMN-Sm complex that contains SMN1, GEMIN2/SIP1, DDX20/GEMIN3, GEMIN4, GEMIN5, GEMIN6, GEMIN7, GEMIN8, STRAP/UNRIP and the Sm proteins SNRPB, SNRPD1, SNRPD2, SNRPD3, SNRPE, SNRPF and SNRPG (PubMed:11714716, PubMed:16314521, PubMed:20513430). Interacts with GEMIN2; the interaction is direct (PubMed:17178713). Interacts with SMN1, SNRPB, SNRPD1, SNRPD2, SNRPD3 and SNRPE; the interaction is direct (PubMed:11714716). Interacts with cytosolic DDX20/GEMIN3 and GEMIN4 (PubMed:19750007, PubMed:27507887, PubMed:33963192). Interacts with SNRNP70 and HNRNPU (PubMed:27507887). Identified in a complex with 80S ribosomes; binds to the 60S large ribosomal subunit (PubMed:27507887). Interacts with the ribosomal subunits RPL3 and RPL4 (PubMed:27507887).</text>
</comment>
<comment type="interaction">
    <interactant intactId="EBI-443630">
        <id>Q8TEQ6</id>
    </interactant>
    <interactant intactId="EBI-73440">
        <id>P06730</id>
        <label>EIF4E</label>
    </interactant>
    <organismsDiffer>false</organismsDiffer>
    <experiments>3</experiments>
</comment>
<comment type="interaction">
    <interactant intactId="EBI-443630">
        <id>Q8TEQ6</id>
    </interactant>
    <interactant intactId="EBI-395421">
        <id>Q16637</id>
        <label>SMN2</label>
    </interactant>
    <organismsDiffer>false</organismsDiffer>
    <experiments>8</experiments>
</comment>
<comment type="interaction">
    <interactant intactId="EBI-443630">
        <id>Q8TEQ6</id>
    </interactant>
    <interactant intactId="EBI-348082">
        <id>P62304</id>
        <label>SNRPE</label>
    </interactant>
    <organismsDiffer>false</organismsDiffer>
    <experiments>6</experiments>
</comment>
<comment type="subcellular location">
    <subcellularLocation>
        <location evidence="3">Nucleus</location>
        <location evidence="3">Nucleoplasm</location>
    </subcellularLocation>
    <subcellularLocation>
        <location evidence="3">Nucleus</location>
        <location evidence="3">Gem</location>
    </subcellularLocation>
    <subcellularLocation>
        <location evidence="3 12 13 14 15">Cytoplasm</location>
    </subcellularLocation>
    <text evidence="3">Found both in the nucleoplasm and in nuclear bodies called gems (Gemini of Cajal bodies) that are often in proximity to Cajal (coiled) bodies. Also found in the cytoplasm.</text>
</comment>
<comment type="domain">
    <text evidence="11 12 15 16 17 18 21">The WD repeat domain mediates binding to U1 snRNA and to U4 snRNA (PubMed:19377484, PubMed:19750007, PubMed:27834343, PubMed:27881600, PubMed:27881601). The WD repeat domain also mediates binding to the 7-methylguanosine cap that is found both on mRNA and snRNA molecules (PubMed:19750007, PubMed:27834343, PubMed:27881600, PubMed:27881601, Ref.27). The regions that bind snRNA molecules and the isolated 7-methylguanosine cap overlap at least partially (PubMed:27834343, PubMed:27881600, PubMed:27881601). Besides, the WD repeat domain mediates interaction with the 60S large ribosomal subunit (PubMed:27507887).</text>
</comment>
<comment type="disease" evidence="19">
    <disease id="DI-06113">
        <name>Neurodevelopmental disorder with cerebellar atrophy and motor dysfunction</name>
        <acronym>NEDCAM</acronym>
        <description>An autosomal recessive disorder characterized by global developmental delay with predominantly motor abnormalities, axial hypotonia with decreased or absent reflexes, gait ataxia and appendicular spasticity. Affected individuals have cognitive impairment and speech delay. Brain imaging shows cerebellar atrophy.</description>
        <dbReference type="MIM" id="619333"/>
    </disease>
    <text>The disease is caused by variants affecting the gene represented in this entry.</text>
</comment>
<comment type="similarity">
    <text evidence="22">Belongs to the WD repeat gemin-5 family.</text>
</comment>
<comment type="sequence caution" evidence="22">
    <conflict type="erroneous initiation">
        <sequence resource="EMBL-CDS" id="BAB84892"/>
    </conflict>
    <text>Extended N-terminus.</text>
</comment>
<proteinExistence type="evidence at protein level"/>
<accession>Q8TEQ6</accession>
<accession>Q14CV0</accession>
<accession>Q8WWV4</accession>
<accession>Q969W4</accession>
<accession>Q9H9K3</accession>
<accession>Q9UFI5</accession>
<organism>
    <name type="scientific">Homo sapiens</name>
    <name type="common">Human</name>
    <dbReference type="NCBI Taxonomy" id="9606"/>
    <lineage>
        <taxon>Eukaryota</taxon>
        <taxon>Metazoa</taxon>
        <taxon>Chordata</taxon>
        <taxon>Craniata</taxon>
        <taxon>Vertebrata</taxon>
        <taxon>Euteleostomi</taxon>
        <taxon>Mammalia</taxon>
        <taxon>Eutheria</taxon>
        <taxon>Euarchontoglires</taxon>
        <taxon>Primates</taxon>
        <taxon>Haplorrhini</taxon>
        <taxon>Catarrhini</taxon>
        <taxon>Hominidae</taxon>
        <taxon>Homo</taxon>
    </lineage>
</organism>